<accession>P00760</accession>
<accession>A6H6Y3</accession>
<sequence>MKTFIFLALLGAAVAFPVDDDDKIVGGYTCGANTVPYQVSLNSGYHFCGGSLINSQWVVSAAHCYKSGIQVRLGEDNINVVEGNEQFISASKSIVHPSYNSNTLNNDIMLIKLKSAASLNSRVASISLPTSCASAGTQCLISGWGNTKSSGTSYPDVLKCLKAPILSDSSCKSAYPGQITSNMFCAGYLEGGKDSCQGDSGGPVVCSGKLQGIVSWGSGCAQKNKPGVYTKVCNYVSWIKQTIASN</sequence>
<name>TRY1_BOVIN</name>
<feature type="signal peptide" evidence="6">
    <location>
        <begin position="1"/>
        <end position="17"/>
    </location>
</feature>
<feature type="propeptide" id="PRO_0000028185" description="Activation peptide">
    <location>
        <begin position="18"/>
        <end position="23"/>
    </location>
</feature>
<feature type="chain" id="PRO_0000028186" description="Serine protease 1">
    <location>
        <begin position="24"/>
        <end position="246"/>
    </location>
</feature>
<feature type="chain" id="PRO_0000028187" description="Alpha-trypsin chain 1">
    <location>
        <begin position="24"/>
        <end position="148"/>
    </location>
</feature>
<feature type="chain" id="PRO_0000028188" description="Alpha-trypsin chain 2">
    <location>
        <begin position="149"/>
        <end position="246"/>
    </location>
</feature>
<feature type="domain" description="Peptidase S1" evidence="3">
    <location>
        <begin position="24"/>
        <end position="244"/>
    </location>
</feature>
<feature type="active site" description="Charge relay system">
    <location>
        <position position="63"/>
    </location>
</feature>
<feature type="active site" description="Charge relay system">
    <location>
        <position position="107"/>
    </location>
</feature>
<feature type="active site" description="Charge relay system">
    <location>
        <position position="200"/>
    </location>
</feature>
<feature type="binding site">
    <location>
        <position position="75"/>
    </location>
    <ligand>
        <name>Ca(2+)</name>
        <dbReference type="ChEBI" id="CHEBI:29108"/>
    </ligand>
</feature>
<feature type="binding site">
    <location>
        <position position="77"/>
    </location>
    <ligand>
        <name>Ca(2+)</name>
        <dbReference type="ChEBI" id="CHEBI:29108"/>
    </ligand>
</feature>
<feature type="binding site">
    <location>
        <position position="80"/>
    </location>
    <ligand>
        <name>Ca(2+)</name>
        <dbReference type="ChEBI" id="CHEBI:29108"/>
    </ligand>
</feature>
<feature type="binding site">
    <location>
        <position position="85"/>
    </location>
    <ligand>
        <name>Ca(2+)</name>
        <dbReference type="ChEBI" id="CHEBI:29108"/>
    </ligand>
</feature>
<feature type="binding site">
    <location>
        <begin position="194"/>
        <end position="195"/>
    </location>
    <ligand>
        <name>substrate</name>
    </ligand>
</feature>
<feature type="binding site">
    <location>
        <begin position="197"/>
        <end position="198"/>
    </location>
    <ligand>
        <name>substrate</name>
    </ligand>
</feature>
<feature type="binding site">
    <location>
        <position position="200"/>
    </location>
    <ligand>
        <name>substrate</name>
    </ligand>
</feature>
<feature type="disulfide bond" evidence="5 8">
    <location>
        <begin position="30"/>
        <end position="160"/>
    </location>
</feature>
<feature type="disulfide bond" evidence="5 8">
    <location>
        <begin position="48"/>
        <end position="64"/>
    </location>
</feature>
<feature type="disulfide bond" evidence="5 8">
    <location>
        <begin position="132"/>
        <end position="233"/>
    </location>
</feature>
<feature type="disulfide bond" evidence="5 8">
    <location>
        <begin position="139"/>
        <end position="206"/>
    </location>
</feature>
<feature type="disulfide bond" evidence="5 8">
    <location>
        <begin position="171"/>
        <end position="185"/>
    </location>
</feature>
<feature type="disulfide bond" evidence="5 8">
    <location>
        <begin position="196"/>
        <end position="220"/>
    </location>
</feature>
<feature type="turn" evidence="11">
    <location>
        <begin position="23"/>
        <end position="26"/>
    </location>
</feature>
<feature type="turn" evidence="11">
    <location>
        <begin position="32"/>
        <end position="34"/>
    </location>
</feature>
<feature type="strand" evidence="13">
    <location>
        <begin position="38"/>
        <end position="52"/>
    </location>
</feature>
<feature type="strand" evidence="13">
    <location>
        <begin position="54"/>
        <end position="60"/>
    </location>
</feature>
<feature type="helix" evidence="13">
    <location>
        <begin position="62"/>
        <end position="64"/>
    </location>
</feature>
<feature type="strand" evidence="13">
    <location>
        <begin position="70"/>
        <end position="74"/>
    </location>
</feature>
<feature type="strand" evidence="9">
    <location>
        <begin position="76"/>
        <end position="80"/>
    </location>
</feature>
<feature type="strand" evidence="10">
    <location>
        <begin position="81"/>
        <end position="84"/>
    </location>
</feature>
<feature type="strand" evidence="13">
    <location>
        <begin position="86"/>
        <end position="95"/>
    </location>
</feature>
<feature type="turn" evidence="13">
    <location>
        <begin position="101"/>
        <end position="103"/>
    </location>
</feature>
<feature type="strand" evidence="13">
    <location>
        <begin position="109"/>
        <end position="115"/>
    </location>
</feature>
<feature type="strand" evidence="15">
    <location>
        <begin position="121"/>
        <end position="123"/>
    </location>
</feature>
<feature type="strand" evidence="13">
    <location>
        <begin position="138"/>
        <end position="145"/>
    </location>
</feature>
<feature type="strand" evidence="13">
    <location>
        <begin position="149"/>
        <end position="151"/>
    </location>
</feature>
<feature type="strand" evidence="13">
    <location>
        <begin position="159"/>
        <end position="165"/>
    </location>
</feature>
<feature type="helix" evidence="13">
    <location>
        <begin position="168"/>
        <end position="174"/>
    </location>
</feature>
<feature type="turn" evidence="13">
    <location>
        <begin position="176"/>
        <end position="178"/>
    </location>
</feature>
<feature type="turn" evidence="12">
    <location>
        <begin position="180"/>
        <end position="182"/>
    </location>
</feature>
<feature type="strand" evidence="13">
    <location>
        <begin position="183"/>
        <end position="187"/>
    </location>
</feature>
<feature type="strand" evidence="14">
    <location>
        <begin position="189"/>
        <end position="192"/>
    </location>
</feature>
<feature type="turn" evidence="16">
    <location>
        <begin position="197"/>
        <end position="201"/>
    </location>
</feature>
<feature type="strand" evidence="13">
    <location>
        <begin position="203"/>
        <end position="206"/>
    </location>
</feature>
<feature type="strand" evidence="13">
    <location>
        <begin position="209"/>
        <end position="216"/>
    </location>
</feature>
<feature type="strand" evidence="13">
    <location>
        <begin position="218"/>
        <end position="221"/>
    </location>
</feature>
<feature type="strand" evidence="13">
    <location>
        <begin position="227"/>
        <end position="231"/>
    </location>
</feature>
<feature type="helix" evidence="13">
    <location>
        <begin position="232"/>
        <end position="235"/>
    </location>
</feature>
<feature type="helix" evidence="13">
    <location>
        <begin position="236"/>
        <end position="244"/>
    </location>
</feature>
<gene>
    <name type="primary">PRSS1</name>
    <name type="synonym">TRP1</name>
    <name evidence="2" type="synonym">TRY1</name>
    <name type="synonym">TRYP1</name>
</gene>
<protein>
    <recommendedName>
        <fullName evidence="2">Serine protease 1</fullName>
        <ecNumber>3.4.21.4</ecNumber>
    </recommendedName>
    <alternativeName>
        <fullName evidence="1">Anionic trypsin I</fullName>
    </alternativeName>
    <alternativeName>
        <fullName evidence="1">Anionic trypsin-I</fullName>
    </alternativeName>
    <alternativeName>
        <fullName>Beta-trypsin</fullName>
    </alternativeName>
    <alternativeName>
        <fullName>Cationic trypsin</fullName>
    </alternativeName>
    <alternativeName>
        <fullName evidence="1">Pretrypsinogen I</fullName>
    </alternativeName>
    <alternativeName>
        <fullName evidence="2">Trypsin I</fullName>
    </alternativeName>
    <alternativeName>
        <fullName>Trypsin-I</fullName>
    </alternativeName>
    <component>
        <recommendedName>
            <fullName>Alpha-trypsin chain 1</fullName>
        </recommendedName>
    </component>
    <component>
        <recommendedName>
            <fullName>Alpha-trypsin chain 2</fullName>
        </recommendedName>
    </component>
</protein>
<dbReference type="EC" id="3.4.21.4"/>
<dbReference type="EMBL" id="BC134797">
    <property type="protein sequence ID" value="AAI34798.1"/>
    <property type="molecule type" value="mRNA"/>
</dbReference>
<dbReference type="EMBL" id="BC146041">
    <property type="protein sequence ID" value="AAI46042.1"/>
    <property type="molecule type" value="mRNA"/>
</dbReference>
<dbReference type="EMBL" id="D38507">
    <property type="protein sequence ID" value="BAA07516.1"/>
    <property type="molecule type" value="mRNA"/>
</dbReference>
<dbReference type="PIR" id="A90164">
    <property type="entry name" value="TRBOTR"/>
</dbReference>
<dbReference type="RefSeq" id="NP_001107199.1">
    <property type="nucleotide sequence ID" value="NM_001113727.2"/>
</dbReference>
<dbReference type="RefSeq" id="XP_871686.4">
    <property type="nucleotide sequence ID" value="XM_866593.7"/>
</dbReference>
<dbReference type="PDB" id="1AQ7">
    <property type="method" value="X-ray"/>
    <property type="resolution" value="2.20 A"/>
    <property type="chains" value="A=24-246"/>
</dbReference>
<dbReference type="PDB" id="1AUJ">
    <property type="method" value="X-ray"/>
    <property type="resolution" value="2.10 A"/>
    <property type="chains" value="A=24-246"/>
</dbReference>
<dbReference type="PDB" id="1AZ8">
    <property type="method" value="X-ray"/>
    <property type="resolution" value="1.80 A"/>
    <property type="chains" value="A=24-246"/>
</dbReference>
<dbReference type="PDB" id="1BJU">
    <property type="method" value="X-ray"/>
    <property type="resolution" value="1.80 A"/>
    <property type="chains" value="A=24-246"/>
</dbReference>
<dbReference type="PDB" id="1BJV">
    <property type="method" value="X-ray"/>
    <property type="resolution" value="1.80 A"/>
    <property type="chains" value="A=24-246"/>
</dbReference>
<dbReference type="PDB" id="1BTP">
    <property type="method" value="X-ray"/>
    <property type="resolution" value="2.20 A"/>
    <property type="chains" value="A=18-246"/>
</dbReference>
<dbReference type="PDB" id="1BTW">
    <property type="method" value="X-ray"/>
    <property type="resolution" value="1.70 A"/>
    <property type="chains" value="A=18-246"/>
</dbReference>
<dbReference type="PDB" id="1BTX">
    <property type="method" value="X-ray"/>
    <property type="resolution" value="1.70 A"/>
    <property type="chains" value="A=18-246"/>
</dbReference>
<dbReference type="PDB" id="1BTY">
    <property type="method" value="X-ray"/>
    <property type="resolution" value="1.50 A"/>
    <property type="chains" value="A=18-246"/>
</dbReference>
<dbReference type="PDB" id="1BTZ">
    <property type="method" value="X-ray"/>
    <property type="resolution" value="2.00 A"/>
    <property type="chains" value="A=18-246"/>
</dbReference>
<dbReference type="PDB" id="1C1N">
    <property type="method" value="X-ray"/>
    <property type="resolution" value="1.40 A"/>
    <property type="chains" value="A=24-246"/>
</dbReference>
<dbReference type="PDB" id="1C1O">
    <property type="method" value="X-ray"/>
    <property type="resolution" value="1.40 A"/>
    <property type="chains" value="A=24-246"/>
</dbReference>
<dbReference type="PDB" id="1C1P">
    <property type="method" value="X-ray"/>
    <property type="resolution" value="1.37 A"/>
    <property type="chains" value="A=24-246"/>
</dbReference>
<dbReference type="PDB" id="1C1Q">
    <property type="method" value="X-ray"/>
    <property type="resolution" value="1.37 A"/>
    <property type="chains" value="A=24-246"/>
</dbReference>
<dbReference type="PDB" id="1C1R">
    <property type="method" value="X-ray"/>
    <property type="resolution" value="1.37 A"/>
    <property type="chains" value="A=24-246"/>
</dbReference>
<dbReference type="PDB" id="1C1S">
    <property type="method" value="X-ray"/>
    <property type="resolution" value="1.63 A"/>
    <property type="chains" value="A=24-246"/>
</dbReference>
<dbReference type="PDB" id="1C1T">
    <property type="method" value="X-ray"/>
    <property type="resolution" value="1.37 A"/>
    <property type="chains" value="A=24-246"/>
</dbReference>
<dbReference type="PDB" id="1C2D">
    <property type="method" value="X-ray"/>
    <property type="resolution" value="1.65 A"/>
    <property type="chains" value="A=24-246"/>
</dbReference>
<dbReference type="PDB" id="1C2E">
    <property type="method" value="X-ray"/>
    <property type="resolution" value="1.65 A"/>
    <property type="chains" value="A=24-246"/>
</dbReference>
<dbReference type="PDB" id="1C2F">
    <property type="method" value="X-ray"/>
    <property type="resolution" value="1.70 A"/>
    <property type="chains" value="A=24-246"/>
</dbReference>
<dbReference type="PDB" id="1C2G">
    <property type="method" value="X-ray"/>
    <property type="resolution" value="1.65 A"/>
    <property type="chains" value="A=24-246"/>
</dbReference>
<dbReference type="PDB" id="1C2H">
    <property type="method" value="X-ray"/>
    <property type="resolution" value="1.40 A"/>
    <property type="chains" value="A=24-246"/>
</dbReference>
<dbReference type="PDB" id="1C2I">
    <property type="method" value="X-ray"/>
    <property type="resolution" value="1.47 A"/>
    <property type="chains" value="A=24-246"/>
</dbReference>
<dbReference type="PDB" id="1C2J">
    <property type="method" value="X-ray"/>
    <property type="resolution" value="1.40 A"/>
    <property type="chains" value="A=24-246"/>
</dbReference>
<dbReference type="PDB" id="1C2K">
    <property type="method" value="X-ray"/>
    <property type="resolution" value="1.65 A"/>
    <property type="chains" value="A=24-246"/>
</dbReference>
<dbReference type="PDB" id="1C2L">
    <property type="method" value="X-ray"/>
    <property type="resolution" value="1.50 A"/>
    <property type="chains" value="A=24-246"/>
</dbReference>
<dbReference type="PDB" id="1C2M">
    <property type="method" value="X-ray"/>
    <property type="resolution" value="1.40 A"/>
    <property type="chains" value="A=24-246"/>
</dbReference>
<dbReference type="PDB" id="1C5P">
    <property type="method" value="X-ray"/>
    <property type="resolution" value="1.43 A"/>
    <property type="chains" value="A=24-246"/>
</dbReference>
<dbReference type="PDB" id="1C5Q">
    <property type="method" value="X-ray"/>
    <property type="resolution" value="1.43 A"/>
    <property type="chains" value="A=24-246"/>
</dbReference>
<dbReference type="PDB" id="1C5R">
    <property type="method" value="X-ray"/>
    <property type="resolution" value="1.47 A"/>
    <property type="chains" value="A=24-246"/>
</dbReference>
<dbReference type="PDB" id="1C5S">
    <property type="method" value="X-ray"/>
    <property type="resolution" value="1.36 A"/>
    <property type="chains" value="A=24-246"/>
</dbReference>
<dbReference type="PDB" id="1C5T">
    <property type="method" value="X-ray"/>
    <property type="resolution" value="1.37 A"/>
    <property type="chains" value="A=24-246"/>
</dbReference>
<dbReference type="PDB" id="1C5U">
    <property type="method" value="X-ray"/>
    <property type="resolution" value="1.37 A"/>
    <property type="chains" value="A=24-246"/>
</dbReference>
<dbReference type="PDB" id="1C5V">
    <property type="method" value="X-ray"/>
    <property type="resolution" value="1.48 A"/>
    <property type="chains" value="A=24-246"/>
</dbReference>
<dbReference type="PDB" id="1C9T">
    <property type="method" value="X-ray"/>
    <property type="resolution" value="3.30 A"/>
    <property type="chains" value="A/B/C/D/E/F=24-246"/>
</dbReference>
<dbReference type="PDB" id="1CE5">
    <property type="method" value="X-ray"/>
    <property type="resolution" value="1.90 A"/>
    <property type="chains" value="A=24-246"/>
</dbReference>
<dbReference type="PDB" id="1D6R">
    <property type="method" value="X-ray"/>
    <property type="resolution" value="2.30 A"/>
    <property type="chains" value="A=24-246"/>
</dbReference>
<dbReference type="PDB" id="1EB2">
    <property type="method" value="X-ray"/>
    <property type="resolution" value="2.00 A"/>
    <property type="chains" value="A=24-246"/>
</dbReference>
<dbReference type="PDB" id="1EJM">
    <property type="method" value="X-ray"/>
    <property type="resolution" value="1.85 A"/>
    <property type="chains" value="A/C/E=24-246"/>
</dbReference>
<dbReference type="PDB" id="1EZX">
    <property type="method" value="X-ray"/>
    <property type="resolution" value="2.60 A"/>
    <property type="chains" value="C=4-246"/>
</dbReference>
<dbReference type="PDB" id="1F0T">
    <property type="method" value="X-ray"/>
    <property type="resolution" value="1.80 A"/>
    <property type="chains" value="A=4-246"/>
</dbReference>
<dbReference type="PDB" id="1F0U">
    <property type="method" value="X-ray"/>
    <property type="resolution" value="1.90 A"/>
    <property type="chains" value="A=4-246"/>
</dbReference>
<dbReference type="PDB" id="1F2S">
    <property type="method" value="X-ray"/>
    <property type="resolution" value="1.79 A"/>
    <property type="chains" value="E=24-246"/>
</dbReference>
<dbReference type="PDB" id="1G36">
    <property type="method" value="X-ray"/>
    <property type="resolution" value="1.90 A"/>
    <property type="chains" value="A=24-246"/>
</dbReference>
<dbReference type="PDB" id="1G3B">
    <property type="method" value="X-ray"/>
    <property type="resolution" value="1.80 A"/>
    <property type="chains" value="A=19-246"/>
</dbReference>
<dbReference type="PDB" id="1G3C">
    <property type="method" value="X-ray"/>
    <property type="resolution" value="1.80 A"/>
    <property type="chains" value="A=19-246"/>
</dbReference>
<dbReference type="PDB" id="1G3D">
    <property type="method" value="X-ray"/>
    <property type="resolution" value="1.80 A"/>
    <property type="chains" value="A=19-246"/>
</dbReference>
<dbReference type="PDB" id="1G3E">
    <property type="method" value="X-ray"/>
    <property type="resolution" value="1.80 A"/>
    <property type="chains" value="A=19-246"/>
</dbReference>
<dbReference type="PDB" id="1G9I">
    <property type="method" value="X-ray"/>
    <property type="resolution" value="2.20 A"/>
    <property type="chains" value="E=24-246"/>
</dbReference>
<dbReference type="PDB" id="1GBT">
    <property type="method" value="X-ray"/>
    <property type="resolution" value="2.00 A"/>
    <property type="chains" value="A=24-246"/>
</dbReference>
<dbReference type="PDB" id="1GHZ">
    <property type="method" value="X-ray"/>
    <property type="resolution" value="1.39 A"/>
    <property type="chains" value="A=24-246"/>
</dbReference>
<dbReference type="PDB" id="1GI0">
    <property type="method" value="X-ray"/>
    <property type="resolution" value="1.42 A"/>
    <property type="chains" value="A=24-246"/>
</dbReference>
<dbReference type="PDB" id="1GI1">
    <property type="method" value="X-ray"/>
    <property type="resolution" value="1.42 A"/>
    <property type="chains" value="A=24-246"/>
</dbReference>
<dbReference type="PDB" id="1GI2">
    <property type="method" value="X-ray"/>
    <property type="resolution" value="1.38 A"/>
    <property type="chains" value="A=24-246"/>
</dbReference>
<dbReference type="PDB" id="1GI3">
    <property type="method" value="X-ray"/>
    <property type="resolution" value="1.44 A"/>
    <property type="chains" value="A=24-246"/>
</dbReference>
<dbReference type="PDB" id="1GI4">
    <property type="method" value="X-ray"/>
    <property type="resolution" value="1.37 A"/>
    <property type="chains" value="A=24-246"/>
</dbReference>
<dbReference type="PDB" id="1GI5">
    <property type="method" value="X-ray"/>
    <property type="resolution" value="1.60 A"/>
    <property type="chains" value="A=24-246"/>
</dbReference>
<dbReference type="PDB" id="1GI6">
    <property type="method" value="X-ray"/>
    <property type="resolution" value="1.49 A"/>
    <property type="chains" value="A=24-246"/>
</dbReference>
<dbReference type="PDB" id="1GJ6">
    <property type="method" value="X-ray"/>
    <property type="resolution" value="1.50 A"/>
    <property type="chains" value="A=24-246"/>
</dbReference>
<dbReference type="PDB" id="1HJ9">
    <property type="method" value="X-ray"/>
    <property type="resolution" value="0.95 A"/>
    <property type="chains" value="A=24-246"/>
</dbReference>
<dbReference type="PDB" id="1J8A">
    <property type="method" value="X-ray"/>
    <property type="resolution" value="1.21 A"/>
    <property type="chains" value="A=24-246"/>
</dbReference>
<dbReference type="PDB" id="1JIR">
    <property type="method" value="X-ray"/>
    <property type="resolution" value="2.00 A"/>
    <property type="chains" value="A=24-246"/>
</dbReference>
<dbReference type="PDB" id="1JRS">
    <property type="method" value="X-ray"/>
    <property type="resolution" value="1.80 A"/>
    <property type="chains" value="A=24-246"/>
</dbReference>
<dbReference type="PDB" id="1JRT">
    <property type="method" value="X-ray"/>
    <property type="resolution" value="1.70 A"/>
    <property type="chains" value="A=24-246"/>
</dbReference>
<dbReference type="PDB" id="1K1I">
    <property type="method" value="X-ray"/>
    <property type="resolution" value="2.20 A"/>
    <property type="chains" value="A=24-246"/>
</dbReference>
<dbReference type="PDB" id="1K1J">
    <property type="method" value="X-ray"/>
    <property type="resolution" value="2.20 A"/>
    <property type="chains" value="A=24-246"/>
</dbReference>
<dbReference type="PDB" id="1K1L">
    <property type="method" value="X-ray"/>
    <property type="resolution" value="2.50 A"/>
    <property type="chains" value="A=24-246"/>
</dbReference>
<dbReference type="PDB" id="1K1M">
    <property type="method" value="X-ray"/>
    <property type="resolution" value="2.20 A"/>
    <property type="chains" value="A=24-246"/>
</dbReference>
<dbReference type="PDB" id="1K1N">
    <property type="method" value="X-ray"/>
    <property type="resolution" value="2.00 A"/>
    <property type="chains" value="A=24-246"/>
</dbReference>
<dbReference type="PDB" id="1K1O">
    <property type="method" value="X-ray"/>
    <property type="resolution" value="2.00 A"/>
    <property type="chains" value="A=24-246"/>
</dbReference>
<dbReference type="PDB" id="1K1P">
    <property type="method" value="X-ray"/>
    <property type="resolution" value="1.90 A"/>
    <property type="chains" value="A=24-246"/>
</dbReference>
<dbReference type="PDB" id="1LQE">
    <property type="method" value="X-ray"/>
    <property type="resolution" value="2.20 A"/>
    <property type="chains" value="A=4-246"/>
</dbReference>
<dbReference type="PDB" id="1MAX">
    <property type="method" value="X-ray"/>
    <property type="resolution" value="1.80 A"/>
    <property type="chains" value="A=24-246"/>
</dbReference>
<dbReference type="PDB" id="1MAY">
    <property type="method" value="X-ray"/>
    <property type="resolution" value="1.80 A"/>
    <property type="chains" value="A=24-246"/>
</dbReference>
<dbReference type="PDB" id="1MTS">
    <property type="method" value="X-ray"/>
    <property type="resolution" value="1.90 A"/>
    <property type="chains" value="A=24-246"/>
</dbReference>
<dbReference type="PDB" id="1MTU">
    <property type="method" value="X-ray"/>
    <property type="resolution" value="1.90 A"/>
    <property type="chains" value="A=24-246"/>
</dbReference>
<dbReference type="PDB" id="1MTV">
    <property type="method" value="X-ray"/>
    <property type="resolution" value="1.90 A"/>
    <property type="chains" value="A=24-246"/>
</dbReference>
<dbReference type="PDB" id="1MTW">
    <property type="method" value="X-ray"/>
    <property type="resolution" value="1.90 A"/>
    <property type="chains" value="A=24-246"/>
</dbReference>
<dbReference type="PDB" id="1N6X">
    <property type="method" value="X-ray"/>
    <property type="resolution" value="1.40 A"/>
    <property type="chains" value="A=24-246"/>
</dbReference>
<dbReference type="PDB" id="1N6Y">
    <property type="method" value="X-ray"/>
    <property type="resolution" value="1.40 A"/>
    <property type="chains" value="A=24-246"/>
</dbReference>
<dbReference type="PDB" id="1NC6">
    <property type="method" value="X-ray"/>
    <property type="resolution" value="1.90 A"/>
    <property type="chains" value="A=24-246"/>
</dbReference>
<dbReference type="PDB" id="1NTP">
    <property type="method" value="Neutron"/>
    <property type="resolution" value="1.80 A"/>
    <property type="chains" value="A=24-246"/>
</dbReference>
<dbReference type="PDB" id="1O2H">
    <property type="method" value="X-ray"/>
    <property type="resolution" value="1.77 A"/>
    <property type="chains" value="A=24-246"/>
</dbReference>
<dbReference type="PDB" id="1O2I">
    <property type="method" value="X-ray"/>
    <property type="resolution" value="1.50 A"/>
    <property type="chains" value="A=24-246"/>
</dbReference>
<dbReference type="PDB" id="1O2J">
    <property type="method" value="X-ray"/>
    <property type="resolution" value="1.65 A"/>
    <property type="chains" value="A=24-246"/>
</dbReference>
<dbReference type="PDB" id="1O2K">
    <property type="method" value="X-ray"/>
    <property type="resolution" value="1.63 A"/>
    <property type="chains" value="A=24-246"/>
</dbReference>
<dbReference type="PDB" id="1O2L">
    <property type="method" value="X-ray"/>
    <property type="resolution" value="1.68 A"/>
    <property type="chains" value="A=24-246"/>
</dbReference>
<dbReference type="PDB" id="1O2M">
    <property type="method" value="X-ray"/>
    <property type="resolution" value="1.69 A"/>
    <property type="chains" value="A=24-246"/>
</dbReference>
<dbReference type="PDB" id="1O2N">
    <property type="method" value="X-ray"/>
    <property type="resolution" value="1.50 A"/>
    <property type="chains" value="A=24-246"/>
</dbReference>
<dbReference type="PDB" id="1O2O">
    <property type="method" value="X-ray"/>
    <property type="resolution" value="1.63 A"/>
    <property type="chains" value="A=24-246"/>
</dbReference>
<dbReference type="PDB" id="1O2P">
    <property type="method" value="X-ray"/>
    <property type="resolution" value="1.47 A"/>
    <property type="chains" value="A=24-246"/>
</dbReference>
<dbReference type="PDB" id="1O2Q">
    <property type="method" value="X-ray"/>
    <property type="resolution" value="1.50 A"/>
    <property type="chains" value="A=24-246"/>
</dbReference>
<dbReference type="PDB" id="1O2R">
    <property type="method" value="X-ray"/>
    <property type="resolution" value="1.45 A"/>
    <property type="chains" value="A=24-246"/>
</dbReference>
<dbReference type="PDB" id="1O2S">
    <property type="method" value="X-ray"/>
    <property type="resolution" value="1.65 A"/>
    <property type="chains" value="A=24-246"/>
</dbReference>
<dbReference type="PDB" id="1O2T">
    <property type="method" value="X-ray"/>
    <property type="resolution" value="1.62 A"/>
    <property type="chains" value="A=24-246"/>
</dbReference>
<dbReference type="PDB" id="1O2U">
    <property type="method" value="X-ray"/>
    <property type="resolution" value="1.41 A"/>
    <property type="chains" value="A=24-246"/>
</dbReference>
<dbReference type="PDB" id="1O2V">
    <property type="method" value="X-ray"/>
    <property type="resolution" value="1.50 A"/>
    <property type="chains" value="A=24-246"/>
</dbReference>
<dbReference type="PDB" id="1O2W">
    <property type="method" value="X-ray"/>
    <property type="resolution" value="1.38 A"/>
    <property type="chains" value="A=24-246"/>
</dbReference>
<dbReference type="PDB" id="1O2X">
    <property type="method" value="X-ray"/>
    <property type="resolution" value="1.46 A"/>
    <property type="chains" value="A=24-246"/>
</dbReference>
<dbReference type="PDB" id="1O2Y">
    <property type="method" value="X-ray"/>
    <property type="resolution" value="1.45 A"/>
    <property type="chains" value="A=24-246"/>
</dbReference>
<dbReference type="PDB" id="1O2Z">
    <property type="method" value="X-ray"/>
    <property type="resolution" value="1.65 A"/>
    <property type="chains" value="A=24-246"/>
</dbReference>
<dbReference type="PDB" id="1O30">
    <property type="method" value="X-ray"/>
    <property type="resolution" value="1.55 A"/>
    <property type="chains" value="A=24-246"/>
</dbReference>
<dbReference type="PDB" id="1O31">
    <property type="method" value="X-ray"/>
    <property type="resolution" value="1.66 A"/>
    <property type="chains" value="A=24-246"/>
</dbReference>
<dbReference type="PDB" id="1O32">
    <property type="method" value="X-ray"/>
    <property type="resolution" value="1.78 A"/>
    <property type="chains" value="A=24-246"/>
</dbReference>
<dbReference type="PDB" id="1O33">
    <property type="method" value="X-ray"/>
    <property type="resolution" value="1.46 A"/>
    <property type="chains" value="A=24-246"/>
</dbReference>
<dbReference type="PDB" id="1O34">
    <property type="method" value="X-ray"/>
    <property type="resolution" value="1.50 A"/>
    <property type="chains" value="A=24-246"/>
</dbReference>
<dbReference type="PDB" id="1O35">
    <property type="method" value="X-ray"/>
    <property type="resolution" value="1.41 A"/>
    <property type="chains" value="A=24-246"/>
</dbReference>
<dbReference type="PDB" id="1O36">
    <property type="method" value="X-ray"/>
    <property type="resolution" value="1.70 A"/>
    <property type="chains" value="A=24-246"/>
</dbReference>
<dbReference type="PDB" id="1O37">
    <property type="method" value="X-ray"/>
    <property type="resolution" value="1.45 A"/>
    <property type="chains" value="A=24-246"/>
</dbReference>
<dbReference type="PDB" id="1O38">
    <property type="method" value="X-ray"/>
    <property type="resolution" value="1.38 A"/>
    <property type="chains" value="A=24-246"/>
</dbReference>
<dbReference type="PDB" id="1O39">
    <property type="method" value="X-ray"/>
    <property type="resolution" value="1.59 A"/>
    <property type="chains" value="A=24-246"/>
</dbReference>
<dbReference type="PDB" id="1O3A">
    <property type="method" value="X-ray"/>
    <property type="resolution" value="2.00 A"/>
    <property type="chains" value="A=24-246"/>
</dbReference>
<dbReference type="PDB" id="1O3B">
    <property type="method" value="X-ray"/>
    <property type="resolution" value="1.75 A"/>
    <property type="chains" value="A=24-246"/>
</dbReference>
<dbReference type="PDB" id="1O3C">
    <property type="method" value="X-ray"/>
    <property type="resolution" value="1.64 A"/>
    <property type="chains" value="A=24-246"/>
</dbReference>
<dbReference type="PDB" id="1O3D">
    <property type="method" value="X-ray"/>
    <property type="resolution" value="1.33 A"/>
    <property type="chains" value="A=24-246"/>
</dbReference>
<dbReference type="PDB" id="1O3E">
    <property type="method" value="X-ray"/>
    <property type="resolution" value="1.64 A"/>
    <property type="chains" value="A=24-246"/>
</dbReference>
<dbReference type="PDB" id="1O3F">
    <property type="method" value="X-ray"/>
    <property type="resolution" value="1.55 A"/>
    <property type="chains" value="A=24-246"/>
</dbReference>
<dbReference type="PDB" id="1O3G">
    <property type="method" value="X-ray"/>
    <property type="resolution" value="1.55 A"/>
    <property type="chains" value="A=24-246"/>
</dbReference>
<dbReference type="PDB" id="1O3H">
    <property type="method" value="X-ray"/>
    <property type="resolution" value="1.53 A"/>
    <property type="chains" value="A=24-246"/>
</dbReference>
<dbReference type="PDB" id="1O3I">
    <property type="method" value="X-ray"/>
    <property type="resolution" value="1.51 A"/>
    <property type="chains" value="A=24-246"/>
</dbReference>
<dbReference type="PDB" id="1O3J">
    <property type="method" value="X-ray"/>
    <property type="resolution" value="1.40 A"/>
    <property type="chains" value="A=24-246"/>
</dbReference>
<dbReference type="PDB" id="1O3K">
    <property type="method" value="X-ray"/>
    <property type="resolution" value="1.43 A"/>
    <property type="chains" value="A=24-246"/>
</dbReference>
<dbReference type="PDB" id="1O3L">
    <property type="method" value="X-ray"/>
    <property type="resolution" value="1.40 A"/>
    <property type="chains" value="A=24-246"/>
</dbReference>
<dbReference type="PDB" id="1O3M">
    <property type="method" value="X-ray"/>
    <property type="resolution" value="1.55 A"/>
    <property type="chains" value="A=24-246"/>
</dbReference>
<dbReference type="PDB" id="1O3N">
    <property type="method" value="X-ray"/>
    <property type="resolution" value="1.55 A"/>
    <property type="chains" value="A=24-246"/>
</dbReference>
<dbReference type="PDB" id="1O3O">
    <property type="method" value="X-ray"/>
    <property type="resolution" value="1.55 A"/>
    <property type="chains" value="A=24-246"/>
</dbReference>
<dbReference type="PDB" id="1OPH">
    <property type="method" value="X-ray"/>
    <property type="resolution" value="2.30 A"/>
    <property type="chains" value="B=4-246"/>
</dbReference>
<dbReference type="PDB" id="1OX1">
    <property type="method" value="X-ray"/>
    <property type="resolution" value="2.00 A"/>
    <property type="chains" value="A=24-246"/>
</dbReference>
<dbReference type="PDB" id="1OYQ">
    <property type="method" value="X-ray"/>
    <property type="resolution" value="1.90 A"/>
    <property type="chains" value="A=24-246"/>
</dbReference>
<dbReference type="PDB" id="1P2I">
    <property type="method" value="X-ray"/>
    <property type="resolution" value="1.65 A"/>
    <property type="chains" value="A=24-246"/>
</dbReference>
<dbReference type="PDB" id="1P2J">
    <property type="method" value="X-ray"/>
    <property type="resolution" value="1.35 A"/>
    <property type="chains" value="A=24-246"/>
</dbReference>
<dbReference type="PDB" id="1P2K">
    <property type="method" value="X-ray"/>
    <property type="resolution" value="1.60 A"/>
    <property type="chains" value="A=24-246"/>
</dbReference>
<dbReference type="PDB" id="1PPC">
    <property type="method" value="X-ray"/>
    <property type="resolution" value="1.80 A"/>
    <property type="chains" value="E=24-246"/>
</dbReference>
<dbReference type="PDB" id="1PPE">
    <property type="method" value="X-ray"/>
    <property type="resolution" value="2.00 A"/>
    <property type="chains" value="E=24-246"/>
</dbReference>
<dbReference type="PDB" id="1PPH">
    <property type="method" value="X-ray"/>
    <property type="resolution" value="1.90 A"/>
    <property type="chains" value="E=24-246"/>
</dbReference>
<dbReference type="PDB" id="1QA0">
    <property type="method" value="X-ray"/>
    <property type="resolution" value="1.80 A"/>
    <property type="chains" value="A=24-246"/>
</dbReference>
<dbReference type="PDB" id="1QB1">
    <property type="method" value="X-ray"/>
    <property type="resolution" value="1.80 A"/>
    <property type="chains" value="A=24-246"/>
</dbReference>
<dbReference type="PDB" id="1QB6">
    <property type="method" value="X-ray"/>
    <property type="resolution" value="1.80 A"/>
    <property type="chains" value="A=24-246"/>
</dbReference>
<dbReference type="PDB" id="1QB9">
    <property type="method" value="X-ray"/>
    <property type="resolution" value="1.80 A"/>
    <property type="chains" value="A=24-246"/>
</dbReference>
<dbReference type="PDB" id="1QBN">
    <property type="method" value="X-ray"/>
    <property type="resolution" value="1.80 A"/>
    <property type="chains" value="A=24-246"/>
</dbReference>
<dbReference type="PDB" id="1QBO">
    <property type="method" value="X-ray"/>
    <property type="resolution" value="1.80 A"/>
    <property type="chains" value="A=24-246"/>
</dbReference>
<dbReference type="PDB" id="1QCP">
    <property type="method" value="X-ray"/>
    <property type="resolution" value="1.80 A"/>
    <property type="chains" value="A=24-246"/>
</dbReference>
<dbReference type="PDB" id="1QL7">
    <property type="method" value="X-ray"/>
    <property type="resolution" value="2.10 A"/>
    <property type="chains" value="A=24-246"/>
</dbReference>
<dbReference type="PDB" id="1QL8">
    <property type="method" value="X-ray"/>
    <property type="resolution" value="3.00 A"/>
    <property type="chains" value="A=24-246"/>
</dbReference>
<dbReference type="PDB" id="1RXP">
    <property type="method" value="X-ray"/>
    <property type="resolution" value="1.70 A"/>
    <property type="chains" value="A=24-246"/>
</dbReference>
<dbReference type="PDB" id="1S0Q">
    <property type="method" value="X-ray"/>
    <property type="resolution" value="1.02 A"/>
    <property type="chains" value="A=24-246"/>
</dbReference>
<dbReference type="PDB" id="1S0R">
    <property type="method" value="X-ray"/>
    <property type="resolution" value="1.02 A"/>
    <property type="chains" value="A=24-246"/>
</dbReference>
<dbReference type="PDB" id="1SBW">
    <property type="method" value="X-ray"/>
    <property type="resolution" value="1.80 A"/>
    <property type="chains" value="A=24-246"/>
</dbReference>
<dbReference type="PDB" id="1SFI">
    <property type="method" value="X-ray"/>
    <property type="resolution" value="1.65 A"/>
    <property type="chains" value="A=24-246"/>
</dbReference>
<dbReference type="PDB" id="1SMF">
    <property type="method" value="X-ray"/>
    <property type="resolution" value="2.10 A"/>
    <property type="chains" value="E=24-246"/>
</dbReference>
<dbReference type="PDB" id="1TAB">
    <property type="method" value="X-ray"/>
    <property type="resolution" value="2.30 A"/>
    <property type="chains" value="E=24-246"/>
</dbReference>
<dbReference type="PDB" id="1TAW">
    <property type="method" value="X-ray"/>
    <property type="resolution" value="1.80 A"/>
    <property type="chains" value="A=24-246"/>
</dbReference>
<dbReference type="PDB" id="1TGB">
    <property type="method" value="X-ray"/>
    <property type="resolution" value="1.80 A"/>
    <property type="chains" value="A=18-246"/>
</dbReference>
<dbReference type="PDB" id="1TGC">
    <property type="method" value="X-ray"/>
    <property type="resolution" value="1.80 A"/>
    <property type="chains" value="A=18-246"/>
</dbReference>
<dbReference type="PDB" id="1TGN">
    <property type="method" value="X-ray"/>
    <property type="resolution" value="1.65 A"/>
    <property type="chains" value="A=18-246"/>
</dbReference>
<dbReference type="PDB" id="1TGS">
    <property type="method" value="X-ray"/>
    <property type="resolution" value="1.80 A"/>
    <property type="chains" value="Z=18-246"/>
</dbReference>
<dbReference type="PDB" id="1TGT">
    <property type="method" value="X-ray"/>
    <property type="resolution" value="1.70 A"/>
    <property type="chains" value="A=18-246"/>
</dbReference>
<dbReference type="PDB" id="1TIO">
    <property type="method" value="X-ray"/>
    <property type="resolution" value="1.93 A"/>
    <property type="chains" value="A=24-246"/>
</dbReference>
<dbReference type="PDB" id="1TLD">
    <property type="method" value="X-ray"/>
    <property type="resolution" value="1.50 A"/>
    <property type="chains" value="A=24-246"/>
</dbReference>
<dbReference type="PDB" id="1TNG">
    <property type="method" value="X-ray"/>
    <property type="resolution" value="1.80 A"/>
    <property type="chains" value="A=18-246"/>
</dbReference>
<dbReference type="PDB" id="1TNH">
    <property type="method" value="X-ray"/>
    <property type="resolution" value="1.80 A"/>
    <property type="chains" value="A=18-246"/>
</dbReference>
<dbReference type="PDB" id="1TNI">
    <property type="method" value="X-ray"/>
    <property type="resolution" value="1.90 A"/>
    <property type="chains" value="A=18-246"/>
</dbReference>
<dbReference type="PDB" id="1TNJ">
    <property type="method" value="X-ray"/>
    <property type="resolution" value="1.80 A"/>
    <property type="chains" value="A=18-246"/>
</dbReference>
<dbReference type="PDB" id="1TNK">
    <property type="method" value="X-ray"/>
    <property type="resolution" value="1.80 A"/>
    <property type="chains" value="A=18-246"/>
</dbReference>
<dbReference type="PDB" id="1TNL">
    <property type="method" value="X-ray"/>
    <property type="resolution" value="1.90 A"/>
    <property type="chains" value="A=18-246"/>
</dbReference>
<dbReference type="PDB" id="1TPA">
    <property type="method" value="X-ray"/>
    <property type="resolution" value="1.90 A"/>
    <property type="chains" value="E=24-246"/>
</dbReference>
<dbReference type="PDB" id="1TPO">
    <property type="method" value="X-ray"/>
    <property type="resolution" value="1.70 A"/>
    <property type="chains" value="A=24-246"/>
</dbReference>
<dbReference type="PDB" id="1TPP">
    <property type="method" value="X-ray"/>
    <property type="resolution" value="1.40 A"/>
    <property type="chains" value="A=24-246"/>
</dbReference>
<dbReference type="PDB" id="1TPS">
    <property type="method" value="X-ray"/>
    <property type="resolution" value="1.90 A"/>
    <property type="chains" value="A=24-246"/>
</dbReference>
<dbReference type="PDB" id="1TX7">
    <property type="method" value="X-ray"/>
    <property type="resolution" value="1.75 A"/>
    <property type="chains" value="A=24-246"/>
</dbReference>
<dbReference type="PDB" id="1TX8">
    <property type="method" value="X-ray"/>
    <property type="resolution" value="1.70 A"/>
    <property type="chains" value="A=24-246"/>
</dbReference>
<dbReference type="PDB" id="1TYN">
    <property type="method" value="X-ray"/>
    <property type="resolution" value="2.00 A"/>
    <property type="chains" value="A=24-246"/>
</dbReference>
<dbReference type="PDB" id="1UTN">
    <property type="method" value="X-ray"/>
    <property type="resolution" value="1.15 A"/>
    <property type="chains" value="A=4-246"/>
</dbReference>
<dbReference type="PDB" id="1UTO">
    <property type="method" value="X-ray"/>
    <property type="resolution" value="1.15 A"/>
    <property type="chains" value="A=4-246"/>
</dbReference>
<dbReference type="PDB" id="1UTP">
    <property type="method" value="X-ray"/>
    <property type="resolution" value="1.30 A"/>
    <property type="chains" value="A=4-246"/>
</dbReference>
<dbReference type="PDB" id="1UTQ">
    <property type="method" value="X-ray"/>
    <property type="resolution" value="1.15 A"/>
    <property type="chains" value="A=4-246"/>
</dbReference>
<dbReference type="PDB" id="1V2J">
    <property type="method" value="X-ray"/>
    <property type="resolution" value="1.90 A"/>
    <property type="chains" value="T=24-246"/>
</dbReference>
<dbReference type="PDB" id="1V2K">
    <property type="method" value="X-ray"/>
    <property type="resolution" value="2.00 A"/>
    <property type="chains" value="T=24-246"/>
</dbReference>
<dbReference type="PDB" id="1V2L">
    <property type="method" value="X-ray"/>
    <property type="resolution" value="1.60 A"/>
    <property type="chains" value="T=24-246"/>
</dbReference>
<dbReference type="PDB" id="1V2M">
    <property type="method" value="X-ray"/>
    <property type="resolution" value="1.65 A"/>
    <property type="chains" value="T=24-246"/>
</dbReference>
<dbReference type="PDB" id="1V2N">
    <property type="method" value="X-ray"/>
    <property type="resolution" value="1.80 A"/>
    <property type="chains" value="T=24-246"/>
</dbReference>
<dbReference type="PDB" id="1V2O">
    <property type="method" value="X-ray"/>
    <property type="resolution" value="1.62 A"/>
    <property type="chains" value="T=24-246"/>
</dbReference>
<dbReference type="PDB" id="1V2P">
    <property type="method" value="X-ray"/>
    <property type="resolution" value="1.92 A"/>
    <property type="chains" value="T=24-246"/>
</dbReference>
<dbReference type="PDB" id="1V2Q">
    <property type="method" value="X-ray"/>
    <property type="resolution" value="2.30 A"/>
    <property type="chains" value="T=24-246"/>
</dbReference>
<dbReference type="PDB" id="1V2R">
    <property type="method" value="X-ray"/>
    <property type="resolution" value="1.70 A"/>
    <property type="chains" value="T=24-246"/>
</dbReference>
<dbReference type="PDB" id="1V2S">
    <property type="method" value="X-ray"/>
    <property type="resolution" value="1.72 A"/>
    <property type="chains" value="T=24-246"/>
</dbReference>
<dbReference type="PDB" id="1V2T">
    <property type="method" value="X-ray"/>
    <property type="resolution" value="1.90 A"/>
    <property type="chains" value="T=24-246"/>
</dbReference>
<dbReference type="PDB" id="1V2U">
    <property type="method" value="X-ray"/>
    <property type="resolution" value="1.80 A"/>
    <property type="chains" value="T=24-246"/>
</dbReference>
<dbReference type="PDB" id="1V2V">
    <property type="method" value="X-ray"/>
    <property type="resolution" value="1.80 A"/>
    <property type="chains" value="T=24-246"/>
</dbReference>
<dbReference type="PDB" id="1V2W">
    <property type="method" value="X-ray"/>
    <property type="resolution" value="1.75 A"/>
    <property type="chains" value="T=24-246"/>
</dbReference>
<dbReference type="PDB" id="1XUF">
    <property type="method" value="X-ray"/>
    <property type="resolution" value="1.90 A"/>
    <property type="chains" value="A=24-246"/>
</dbReference>
<dbReference type="PDB" id="1XUG">
    <property type="method" value="X-ray"/>
    <property type="resolution" value="1.50 A"/>
    <property type="chains" value="A=24-246"/>
</dbReference>
<dbReference type="PDB" id="1XUH">
    <property type="method" value="X-ray"/>
    <property type="resolution" value="2.20 A"/>
    <property type="chains" value="A=24-246"/>
</dbReference>
<dbReference type="PDB" id="1XUI">
    <property type="method" value="X-ray"/>
    <property type="resolution" value="1.50 A"/>
    <property type="chains" value="A=24-246"/>
</dbReference>
<dbReference type="PDB" id="1XUJ">
    <property type="method" value="X-ray"/>
    <property type="resolution" value="1.92 A"/>
    <property type="chains" value="A=24-246"/>
</dbReference>
<dbReference type="PDB" id="1XUK">
    <property type="method" value="X-ray"/>
    <property type="resolution" value="1.80 A"/>
    <property type="chains" value="A=24-246"/>
</dbReference>
<dbReference type="PDB" id="1Y3U">
    <property type="method" value="X-ray"/>
    <property type="resolution" value="1.80 A"/>
    <property type="chains" value="A=24-246"/>
</dbReference>
<dbReference type="PDB" id="1Y3V">
    <property type="method" value="X-ray"/>
    <property type="resolution" value="1.60 A"/>
    <property type="chains" value="A=24-246"/>
</dbReference>
<dbReference type="PDB" id="1Y3W">
    <property type="method" value="X-ray"/>
    <property type="resolution" value="1.80 A"/>
    <property type="chains" value="A=24-246"/>
</dbReference>
<dbReference type="PDB" id="1Y3X">
    <property type="method" value="X-ray"/>
    <property type="resolution" value="1.70 A"/>
    <property type="chains" value="A=24-246"/>
</dbReference>
<dbReference type="PDB" id="1Y3Y">
    <property type="method" value="X-ray"/>
    <property type="resolution" value="1.75 A"/>
    <property type="chains" value="A=24-246"/>
</dbReference>
<dbReference type="PDB" id="1Y59">
    <property type="method" value="X-ray"/>
    <property type="resolution" value="1.20 A"/>
    <property type="chains" value="T=24-246"/>
</dbReference>
<dbReference type="PDB" id="1Y5A">
    <property type="method" value="X-ray"/>
    <property type="resolution" value="1.40 A"/>
    <property type="chains" value="T=24-246"/>
</dbReference>
<dbReference type="PDB" id="1Y5B">
    <property type="method" value="X-ray"/>
    <property type="resolution" value="1.65 A"/>
    <property type="chains" value="T=24-246"/>
</dbReference>
<dbReference type="PDB" id="1Y5U">
    <property type="method" value="X-ray"/>
    <property type="resolution" value="1.60 A"/>
    <property type="chains" value="T=24-246"/>
</dbReference>
<dbReference type="PDB" id="1YP9">
    <property type="method" value="X-ray"/>
    <property type="resolution" value="2.10 A"/>
    <property type="chains" value="A=24-246"/>
</dbReference>
<dbReference type="PDB" id="1YYY">
    <property type="method" value="X-ray"/>
    <property type="resolution" value="2.10 A"/>
    <property type="chains" value="1=24-246"/>
</dbReference>
<dbReference type="PDB" id="1ZR0">
    <property type="method" value="X-ray"/>
    <property type="resolution" value="1.80 A"/>
    <property type="chains" value="A/C=24-246"/>
</dbReference>
<dbReference type="PDB" id="1ZZZ">
    <property type="method" value="X-ray"/>
    <property type="resolution" value="1.90 A"/>
    <property type="chains" value="A=10-246"/>
</dbReference>
<dbReference type="PDB" id="2A7H">
    <property type="method" value="X-ray"/>
    <property type="resolution" value="2.10 A"/>
    <property type="chains" value="A=24-246"/>
</dbReference>
<dbReference type="PDB" id="2AGE">
    <property type="method" value="X-ray"/>
    <property type="resolution" value="1.15 A"/>
    <property type="chains" value="X=24-246"/>
</dbReference>
<dbReference type="PDB" id="2AGG">
    <property type="method" value="X-ray"/>
    <property type="resolution" value="1.28 A"/>
    <property type="chains" value="X=24-246"/>
</dbReference>
<dbReference type="PDB" id="2AGI">
    <property type="method" value="X-ray"/>
    <property type="resolution" value="1.14 A"/>
    <property type="chains" value="X=24-246"/>
</dbReference>
<dbReference type="PDB" id="2AH4">
    <property type="method" value="X-ray"/>
    <property type="resolution" value="1.13 A"/>
    <property type="chains" value="X=24-246"/>
</dbReference>
<dbReference type="PDB" id="2AYW">
    <property type="method" value="X-ray"/>
    <property type="resolution" value="0.97 A"/>
    <property type="chains" value="A=24-246"/>
</dbReference>
<dbReference type="PDB" id="2BLV">
    <property type="method" value="X-ray"/>
    <property type="resolution" value="1.20 A"/>
    <property type="chains" value="A=24-246"/>
</dbReference>
<dbReference type="PDB" id="2BLW">
    <property type="method" value="X-ray"/>
    <property type="resolution" value="1.20 A"/>
    <property type="chains" value="A=24-246"/>
</dbReference>
<dbReference type="PDB" id="2BTC">
    <property type="method" value="X-ray"/>
    <property type="resolution" value="1.50 A"/>
    <property type="chains" value="E=24-246"/>
</dbReference>
<dbReference type="PDB" id="2BY5">
    <property type="method" value="X-ray"/>
    <property type="resolution" value="1.30 A"/>
    <property type="chains" value="X=4-246"/>
</dbReference>
<dbReference type="PDB" id="2BY6">
    <property type="method" value="X-ray"/>
    <property type="resolution" value="1.30 A"/>
    <property type="chains" value="X=4-246"/>
</dbReference>
<dbReference type="PDB" id="2BY7">
    <property type="method" value="X-ray"/>
    <property type="resolution" value="1.30 A"/>
    <property type="chains" value="X=4-246"/>
</dbReference>
<dbReference type="PDB" id="2BY8">
    <property type="method" value="X-ray"/>
    <property type="resolution" value="1.30 A"/>
    <property type="chains" value="X=4-246"/>
</dbReference>
<dbReference type="PDB" id="2BY9">
    <property type="method" value="X-ray"/>
    <property type="resolution" value="1.30 A"/>
    <property type="chains" value="X=4-246"/>
</dbReference>
<dbReference type="PDB" id="2BYA">
    <property type="method" value="X-ray"/>
    <property type="resolution" value="1.30 A"/>
    <property type="chains" value="X=4-246"/>
</dbReference>
<dbReference type="PDB" id="2BZA">
    <property type="method" value="X-ray"/>
    <property type="resolution" value="1.90 A"/>
    <property type="chains" value="A=24-246"/>
</dbReference>
<dbReference type="PDB" id="2CMY">
    <property type="method" value="X-ray"/>
    <property type="resolution" value="2.25 A"/>
    <property type="chains" value="A=24-246"/>
</dbReference>
<dbReference type="PDB" id="2D8W">
    <property type="method" value="X-ray"/>
    <property type="resolution" value="2.00 A"/>
    <property type="chains" value="A=24-246"/>
</dbReference>
<dbReference type="PDB" id="2F3C">
    <property type="method" value="X-ray"/>
    <property type="resolution" value="2.50 A"/>
    <property type="chains" value="E=24-246"/>
</dbReference>
<dbReference type="PDB" id="2FI3">
    <property type="method" value="X-ray"/>
    <property type="resolution" value="1.58 A"/>
    <property type="chains" value="E=24-246"/>
</dbReference>
<dbReference type="PDB" id="2FI4">
    <property type="method" value="X-ray"/>
    <property type="resolution" value="1.58 A"/>
    <property type="chains" value="E=24-246"/>
</dbReference>
<dbReference type="PDB" id="2FI5">
    <property type="method" value="X-ray"/>
    <property type="resolution" value="1.58 A"/>
    <property type="chains" value="E=24-246"/>
</dbReference>
<dbReference type="PDB" id="2FTL">
    <property type="method" value="X-ray"/>
    <property type="resolution" value="1.62 A"/>
    <property type="chains" value="E=24-246"/>
</dbReference>
<dbReference type="PDB" id="2FTM">
    <property type="method" value="X-ray"/>
    <property type="resolution" value="1.65 A"/>
    <property type="chains" value="A=24-246"/>
</dbReference>
<dbReference type="PDB" id="2FX4">
    <property type="method" value="X-ray"/>
    <property type="resolution" value="1.65 A"/>
    <property type="chains" value="A=24-246"/>
</dbReference>
<dbReference type="PDB" id="2FX6">
    <property type="method" value="X-ray"/>
    <property type="resolution" value="1.57 A"/>
    <property type="chains" value="A=24-246"/>
</dbReference>
<dbReference type="PDB" id="2G55">
    <property type="method" value="X-ray"/>
    <property type="resolution" value="1.82 A"/>
    <property type="chains" value="A=24-246"/>
</dbReference>
<dbReference type="PDB" id="2G5N">
    <property type="method" value="X-ray"/>
    <property type="resolution" value="1.51 A"/>
    <property type="chains" value="A=24-246"/>
</dbReference>
<dbReference type="PDB" id="2G5V">
    <property type="method" value="X-ray"/>
    <property type="resolution" value="1.45 A"/>
    <property type="chains" value="A=24-246"/>
</dbReference>
<dbReference type="PDB" id="2G81">
    <property type="method" value="X-ray"/>
    <property type="resolution" value="1.55 A"/>
    <property type="chains" value="E=24-246"/>
</dbReference>
<dbReference type="PDB" id="2G8T">
    <property type="method" value="X-ray"/>
    <property type="resolution" value="1.41 A"/>
    <property type="chains" value="A=24-246"/>
</dbReference>
<dbReference type="PDB" id="2ILN">
    <property type="method" value="X-ray"/>
    <property type="resolution" value="2.00 A"/>
    <property type="chains" value="A/B=24-246"/>
</dbReference>
<dbReference type="PDB" id="2J9N">
    <property type="method" value="X-ray"/>
    <property type="resolution" value="1.50 A"/>
    <property type="chains" value="A=24-246"/>
</dbReference>
<dbReference type="PDB" id="2O9Q">
    <property type="method" value="X-ray"/>
    <property type="resolution" value="1.70 A"/>
    <property type="chains" value="A=24-246"/>
</dbReference>
<dbReference type="PDB" id="2OTV">
    <property type="method" value="X-ray"/>
    <property type="resolution" value="1.56 A"/>
    <property type="chains" value="A=24-246"/>
</dbReference>
<dbReference type="PDB" id="2OXS">
    <property type="method" value="X-ray"/>
    <property type="resolution" value="1.32 A"/>
    <property type="chains" value="A=24-246"/>
</dbReference>
<dbReference type="PDB" id="2PLX">
    <property type="method" value="X-ray"/>
    <property type="resolution" value="1.56 A"/>
    <property type="chains" value="A=24-246"/>
</dbReference>
<dbReference type="PDB" id="2PTC">
    <property type="method" value="X-ray"/>
    <property type="resolution" value="1.90 A"/>
    <property type="chains" value="E=24-246"/>
</dbReference>
<dbReference type="PDB" id="2PTN">
    <property type="method" value="X-ray"/>
    <property type="resolution" value="1.55 A"/>
    <property type="chains" value="A=24-246"/>
</dbReference>
<dbReference type="PDB" id="2QN5">
    <property type="method" value="X-ray"/>
    <property type="resolution" value="3.00 A"/>
    <property type="chains" value="T=24-246"/>
</dbReference>
<dbReference type="PDB" id="2QYI">
    <property type="method" value="X-ray"/>
    <property type="resolution" value="2.60 A"/>
    <property type="chains" value="A/C=24-246"/>
</dbReference>
<dbReference type="PDB" id="2TGA">
    <property type="method" value="X-ray"/>
    <property type="resolution" value="1.80 A"/>
    <property type="chains" value="A=18-246"/>
</dbReference>
<dbReference type="PDB" id="2TGD">
    <property type="method" value="X-ray"/>
    <property type="resolution" value="2.10 A"/>
    <property type="chains" value="A=18-246"/>
</dbReference>
<dbReference type="PDB" id="2TGP">
    <property type="method" value="X-ray"/>
    <property type="resolution" value="1.90 A"/>
    <property type="chains" value="Z=18-246"/>
</dbReference>
<dbReference type="PDB" id="2TGT">
    <property type="method" value="X-ray"/>
    <property type="resolution" value="1.70 A"/>
    <property type="chains" value="A=18-246"/>
</dbReference>
<dbReference type="PDB" id="2TIO">
    <property type="method" value="X-ray"/>
    <property type="resolution" value="1.93 A"/>
    <property type="chains" value="A=24-246"/>
</dbReference>
<dbReference type="PDB" id="2TLD">
    <property type="method" value="X-ray"/>
    <property type="resolution" value="2.60 A"/>
    <property type="chains" value="E=24-246"/>
</dbReference>
<dbReference type="PDB" id="2TPI">
    <property type="method" value="X-ray"/>
    <property type="resolution" value="2.10 A"/>
    <property type="chains" value="Z=18-246"/>
</dbReference>
<dbReference type="PDB" id="2UUY">
    <property type="method" value="X-ray"/>
    <property type="resolution" value="1.15 A"/>
    <property type="chains" value="A=24-246"/>
</dbReference>
<dbReference type="PDB" id="2XTT">
    <property type="method" value="X-ray"/>
    <property type="resolution" value="0.93 A"/>
    <property type="chains" value="B=24-246"/>
</dbReference>
<dbReference type="PDB" id="2ZDK">
    <property type="method" value="X-ray"/>
    <property type="resolution" value="1.67 A"/>
    <property type="chains" value="A=24-246"/>
</dbReference>
<dbReference type="PDB" id="2ZDL">
    <property type="method" value="X-ray"/>
    <property type="resolution" value="1.80 A"/>
    <property type="chains" value="A=24-246"/>
</dbReference>
<dbReference type="PDB" id="2ZDM">
    <property type="method" value="X-ray"/>
    <property type="resolution" value="1.93 A"/>
    <property type="chains" value="A=24-246"/>
</dbReference>
<dbReference type="PDB" id="2ZDN">
    <property type="method" value="X-ray"/>
    <property type="resolution" value="1.98 A"/>
    <property type="chains" value="A=24-246"/>
</dbReference>
<dbReference type="PDB" id="2ZFS">
    <property type="method" value="X-ray"/>
    <property type="resolution" value="1.51 A"/>
    <property type="chains" value="A=24-246"/>
</dbReference>
<dbReference type="PDB" id="2ZFT">
    <property type="method" value="X-ray"/>
    <property type="resolution" value="1.76 A"/>
    <property type="chains" value="A=24-246"/>
</dbReference>
<dbReference type="PDB" id="2ZHD">
    <property type="method" value="X-ray"/>
    <property type="resolution" value="1.94 A"/>
    <property type="chains" value="A=24-246"/>
</dbReference>
<dbReference type="PDB" id="2ZQ1">
    <property type="method" value="X-ray"/>
    <property type="resolution" value="1.68 A"/>
    <property type="chains" value="A=24-246"/>
</dbReference>
<dbReference type="PDB" id="2ZQ2">
    <property type="method" value="X-ray"/>
    <property type="resolution" value="1.40 A"/>
    <property type="chains" value="A=24-246"/>
</dbReference>
<dbReference type="PDB" id="3A7T">
    <property type="method" value="X-ray"/>
    <property type="resolution" value="1.75 A"/>
    <property type="chains" value="A=24-246"/>
</dbReference>
<dbReference type="PDB" id="3A7V">
    <property type="method" value="X-ray"/>
    <property type="resolution" value="1.75 A"/>
    <property type="chains" value="A=24-246"/>
</dbReference>
<dbReference type="PDB" id="3A7W">
    <property type="method" value="X-ray"/>
    <property type="resolution" value="1.75 A"/>
    <property type="chains" value="A=24-246"/>
</dbReference>
<dbReference type="PDB" id="3A7X">
    <property type="method" value="X-ray"/>
    <property type="resolution" value="1.75 A"/>
    <property type="chains" value="A=24-246"/>
</dbReference>
<dbReference type="PDB" id="3A7Y">
    <property type="method" value="X-ray"/>
    <property type="resolution" value="1.81 A"/>
    <property type="chains" value="A=24-246"/>
</dbReference>
<dbReference type="PDB" id="3A7Z">
    <property type="method" value="X-ray"/>
    <property type="resolution" value="1.80 A"/>
    <property type="chains" value="A=24-246"/>
</dbReference>
<dbReference type="PDB" id="3A80">
    <property type="method" value="X-ray"/>
    <property type="resolution" value="1.75 A"/>
    <property type="chains" value="A=24-246"/>
</dbReference>
<dbReference type="PDB" id="3A81">
    <property type="method" value="X-ray"/>
    <property type="resolution" value="1.78 A"/>
    <property type="chains" value="A=24-246"/>
</dbReference>
<dbReference type="PDB" id="3A82">
    <property type="method" value="X-ray"/>
    <property type="resolution" value="1.75 A"/>
    <property type="chains" value="A=24-246"/>
</dbReference>
<dbReference type="PDB" id="3A83">
    <property type="method" value="X-ray"/>
    <property type="resolution" value="1.78 A"/>
    <property type="chains" value="A=24-246"/>
</dbReference>
<dbReference type="PDB" id="3A84">
    <property type="method" value="X-ray"/>
    <property type="resolution" value="1.75 A"/>
    <property type="chains" value="A=24-246"/>
</dbReference>
<dbReference type="PDB" id="3A85">
    <property type="method" value="X-ray"/>
    <property type="resolution" value="1.75 A"/>
    <property type="chains" value="A=24-246"/>
</dbReference>
<dbReference type="PDB" id="3A86">
    <property type="method" value="X-ray"/>
    <property type="resolution" value="1.75 A"/>
    <property type="chains" value="A=24-246"/>
</dbReference>
<dbReference type="PDB" id="3A87">
    <property type="method" value="X-ray"/>
    <property type="resolution" value="1.75 A"/>
    <property type="chains" value="A=24-246"/>
</dbReference>
<dbReference type="PDB" id="3A88">
    <property type="method" value="X-ray"/>
    <property type="resolution" value="1.75 A"/>
    <property type="chains" value="A=24-246"/>
</dbReference>
<dbReference type="PDB" id="3A89">
    <property type="method" value="X-ray"/>
    <property type="resolution" value="1.80 A"/>
    <property type="chains" value="A=24-246"/>
</dbReference>
<dbReference type="PDB" id="3A8A">
    <property type="method" value="X-ray"/>
    <property type="resolution" value="1.40 A"/>
    <property type="chains" value="A=24-246"/>
</dbReference>
<dbReference type="PDB" id="3A8B">
    <property type="method" value="X-ray"/>
    <property type="resolution" value="1.75 A"/>
    <property type="chains" value="A=24-246"/>
</dbReference>
<dbReference type="PDB" id="3A8C">
    <property type="method" value="X-ray"/>
    <property type="resolution" value="1.85 A"/>
    <property type="chains" value="A=24-246"/>
</dbReference>
<dbReference type="PDB" id="3A8D">
    <property type="method" value="X-ray"/>
    <property type="resolution" value="1.75 A"/>
    <property type="chains" value="A=24-246"/>
</dbReference>
<dbReference type="PDB" id="3AAS">
    <property type="method" value="X-ray"/>
    <property type="resolution" value="1.75 A"/>
    <property type="chains" value="A=24-246"/>
</dbReference>
<dbReference type="PDB" id="3AAU">
    <property type="method" value="X-ray"/>
    <property type="resolution" value="1.80 A"/>
    <property type="chains" value="A=24-246"/>
</dbReference>
<dbReference type="PDB" id="3AAV">
    <property type="method" value="X-ray"/>
    <property type="resolution" value="1.70 A"/>
    <property type="chains" value="A/B=24-246"/>
</dbReference>
<dbReference type="PDB" id="3ATI">
    <property type="method" value="X-ray"/>
    <property type="resolution" value="1.71 A"/>
    <property type="chains" value="A=24-246"/>
</dbReference>
<dbReference type="PDB" id="3ATK">
    <property type="method" value="X-ray"/>
    <property type="resolution" value="1.74 A"/>
    <property type="chains" value="A=24-246"/>
</dbReference>
<dbReference type="PDB" id="3ATL">
    <property type="method" value="X-ray"/>
    <property type="resolution" value="1.74 A"/>
    <property type="chains" value="A=24-246"/>
</dbReference>
<dbReference type="PDB" id="3ATM">
    <property type="method" value="X-ray"/>
    <property type="resolution" value="1.72 A"/>
    <property type="chains" value="A=24-246"/>
</dbReference>
<dbReference type="PDB" id="3BTD">
    <property type="method" value="X-ray"/>
    <property type="resolution" value="1.90 A"/>
    <property type="chains" value="E=24-246"/>
</dbReference>
<dbReference type="PDB" id="3BTE">
    <property type="method" value="X-ray"/>
    <property type="resolution" value="1.85 A"/>
    <property type="chains" value="E=24-246"/>
</dbReference>
<dbReference type="PDB" id="3BTF">
    <property type="method" value="X-ray"/>
    <property type="resolution" value="1.80 A"/>
    <property type="chains" value="E=24-246"/>
</dbReference>
<dbReference type="PDB" id="3BTG">
    <property type="method" value="X-ray"/>
    <property type="resolution" value="1.90 A"/>
    <property type="chains" value="E=24-246"/>
</dbReference>
<dbReference type="PDB" id="3BTH">
    <property type="method" value="X-ray"/>
    <property type="resolution" value="1.75 A"/>
    <property type="chains" value="E=24-246"/>
</dbReference>
<dbReference type="PDB" id="3BTK">
    <property type="method" value="X-ray"/>
    <property type="resolution" value="1.85 A"/>
    <property type="chains" value="E=24-246"/>
</dbReference>
<dbReference type="PDB" id="3BTM">
    <property type="method" value="X-ray"/>
    <property type="resolution" value="1.80 A"/>
    <property type="chains" value="E=24-246"/>
</dbReference>
<dbReference type="PDB" id="3BTQ">
    <property type="method" value="X-ray"/>
    <property type="resolution" value="1.90 A"/>
    <property type="chains" value="E=24-246"/>
</dbReference>
<dbReference type="PDB" id="3BTT">
    <property type="method" value="X-ray"/>
    <property type="resolution" value="1.90 A"/>
    <property type="chains" value="E=24-246"/>
</dbReference>
<dbReference type="PDB" id="3BTW">
    <property type="method" value="X-ray"/>
    <property type="resolution" value="2.05 A"/>
    <property type="chains" value="E=24-246"/>
</dbReference>
<dbReference type="PDB" id="3D65">
    <property type="method" value="X-ray"/>
    <property type="resolution" value="1.64 A"/>
    <property type="chains" value="E=24-246"/>
</dbReference>
<dbReference type="PDB" id="3E8L">
    <property type="method" value="X-ray"/>
    <property type="resolution" value="2.48 A"/>
    <property type="chains" value="A/B=24-246"/>
</dbReference>
<dbReference type="PDB" id="3GY2">
    <property type="method" value="X-ray"/>
    <property type="resolution" value="1.57 A"/>
    <property type="chains" value="A=24-246"/>
</dbReference>
<dbReference type="PDB" id="3GY3">
    <property type="method" value="X-ray"/>
    <property type="resolution" value="1.70 A"/>
    <property type="chains" value="A=24-246"/>
</dbReference>
<dbReference type="PDB" id="3GY4">
    <property type="method" value="X-ray"/>
    <property type="resolution" value="1.55 A"/>
    <property type="chains" value="A=24-246"/>
</dbReference>
<dbReference type="PDB" id="3GY5">
    <property type="method" value="X-ray"/>
    <property type="resolution" value="1.57 A"/>
    <property type="chains" value="A=24-246"/>
</dbReference>
<dbReference type="PDB" id="3GY6">
    <property type="method" value="X-ray"/>
    <property type="resolution" value="1.70 A"/>
    <property type="chains" value="A=24-246"/>
</dbReference>
<dbReference type="PDB" id="3GY7">
    <property type="method" value="X-ray"/>
    <property type="resolution" value="1.55 A"/>
    <property type="chains" value="A=24-246"/>
</dbReference>
<dbReference type="PDB" id="3GY8">
    <property type="method" value="X-ray"/>
    <property type="resolution" value="1.75 A"/>
    <property type="chains" value="A=24-246"/>
</dbReference>
<dbReference type="PDB" id="3I29">
    <property type="method" value="X-ray"/>
    <property type="resolution" value="2.40 A"/>
    <property type="chains" value="A=24-246"/>
</dbReference>
<dbReference type="PDB" id="3ITI">
    <property type="method" value="X-ray"/>
    <property type="resolution" value="1.55 A"/>
    <property type="chains" value="A=24-246"/>
</dbReference>
<dbReference type="PDB" id="3LJJ">
    <property type="method" value="X-ray"/>
    <property type="resolution" value="1.55 A"/>
    <property type="chains" value="A=24-246"/>
</dbReference>
<dbReference type="PDB" id="3LJO">
    <property type="method" value="X-ray"/>
    <property type="resolution" value="1.50 A"/>
    <property type="chains" value="A=24-246"/>
</dbReference>
<dbReference type="PDB" id="3M35">
    <property type="method" value="X-ray"/>
    <property type="resolution" value="2.20 A"/>
    <property type="chains" value="A=24-246"/>
</dbReference>
<dbReference type="PDB" id="3M7Q">
    <property type="method" value="X-ray"/>
    <property type="resolution" value="1.70 A"/>
    <property type="chains" value="A=24-246"/>
</dbReference>
<dbReference type="PDB" id="3MFJ">
    <property type="method" value="X-ray"/>
    <property type="resolution" value="0.80 A"/>
    <property type="chains" value="A=24-246"/>
</dbReference>
<dbReference type="PDB" id="3MI4">
    <property type="method" value="X-ray"/>
    <property type="resolution" value="0.80 A"/>
    <property type="chains" value="A=24-246"/>
</dbReference>
<dbReference type="PDB" id="3NK8">
    <property type="method" value="X-ray"/>
    <property type="resolution" value="1.15 A"/>
    <property type="chains" value="A=24-246"/>
</dbReference>
<dbReference type="PDB" id="3NKK">
    <property type="method" value="X-ray"/>
    <property type="resolution" value="1.12 A"/>
    <property type="chains" value="A=24-246"/>
</dbReference>
<dbReference type="PDB" id="3OTJ">
    <property type="method" value="Other"/>
    <property type="resolution" value="2.15 A"/>
    <property type="chains" value="E=24-246"/>
</dbReference>
<dbReference type="PDB" id="3PLB">
    <property type="method" value="X-ray"/>
    <property type="resolution" value="1.18 A"/>
    <property type="chains" value="A=24-246"/>
</dbReference>
<dbReference type="PDB" id="3PLK">
    <property type="method" value="X-ray"/>
    <property type="resolution" value="1.53 A"/>
    <property type="chains" value="A=24-246"/>
</dbReference>
<dbReference type="PDB" id="3PLP">
    <property type="method" value="X-ray"/>
    <property type="resolution" value="1.63 A"/>
    <property type="chains" value="A=24-246"/>
</dbReference>
<dbReference type="PDB" id="3PM3">
    <property type="method" value="X-ray"/>
    <property type="resolution" value="1.53 A"/>
    <property type="chains" value="A=24-246"/>
</dbReference>
<dbReference type="PDB" id="3PMJ">
    <property type="method" value="X-ray"/>
    <property type="resolution" value="1.45 A"/>
    <property type="chains" value="A=24-246"/>
</dbReference>
<dbReference type="PDB" id="3PTB">
    <property type="method" value="X-ray"/>
    <property type="resolution" value="1.70 A"/>
    <property type="chains" value="A=24-246"/>
</dbReference>
<dbReference type="PDB" id="3PTN">
    <property type="method" value="X-ray"/>
    <property type="resolution" value="1.70 A"/>
    <property type="chains" value="A=24-246"/>
</dbReference>
<dbReference type="PDB" id="3PWB">
    <property type="method" value="X-ray"/>
    <property type="resolution" value="1.63 A"/>
    <property type="chains" value="A=24-246"/>
</dbReference>
<dbReference type="PDB" id="3PWC">
    <property type="method" value="X-ray"/>
    <property type="resolution" value="1.60 A"/>
    <property type="chains" value="A=24-246"/>
</dbReference>
<dbReference type="PDB" id="3PYH">
    <property type="method" value="X-ray"/>
    <property type="resolution" value="2.00 A"/>
    <property type="chains" value="A=24-246"/>
</dbReference>
<dbReference type="PDB" id="3Q00">
    <property type="method" value="X-ray"/>
    <property type="resolution" value="1.70 A"/>
    <property type="chains" value="A=24-246"/>
</dbReference>
<dbReference type="PDB" id="3QK1">
    <property type="method" value="X-ray"/>
    <property type="resolution" value="2.08 A"/>
    <property type="chains" value="A=24-246"/>
</dbReference>
<dbReference type="PDB" id="3RDZ">
    <property type="method" value="X-ray"/>
    <property type="resolution" value="2.26 A"/>
    <property type="chains" value="A/B=24-246"/>
</dbReference>
<dbReference type="PDB" id="3RU4">
    <property type="method" value="X-ray"/>
    <property type="resolution" value="1.68 A"/>
    <property type="chains" value="T=24-246"/>
</dbReference>
<dbReference type="PDB" id="3RXA">
    <property type="method" value="X-ray"/>
    <property type="resolution" value="1.70 A"/>
    <property type="chains" value="A=24-246"/>
</dbReference>
<dbReference type="PDB" id="3RXB">
    <property type="method" value="X-ray"/>
    <property type="resolution" value="1.70 A"/>
    <property type="chains" value="A=24-246"/>
</dbReference>
<dbReference type="PDB" id="3RXC">
    <property type="method" value="X-ray"/>
    <property type="resolution" value="1.70 A"/>
    <property type="chains" value="A=24-246"/>
</dbReference>
<dbReference type="PDB" id="3RXD">
    <property type="method" value="X-ray"/>
    <property type="resolution" value="1.70 A"/>
    <property type="chains" value="A=24-246"/>
</dbReference>
<dbReference type="PDB" id="3RXE">
    <property type="method" value="X-ray"/>
    <property type="resolution" value="1.70 A"/>
    <property type="chains" value="A=24-246"/>
</dbReference>
<dbReference type="PDB" id="3RXF">
    <property type="method" value="X-ray"/>
    <property type="resolution" value="1.70 A"/>
    <property type="chains" value="A=24-246"/>
</dbReference>
<dbReference type="PDB" id="3RXG">
    <property type="method" value="X-ray"/>
    <property type="resolution" value="1.70 A"/>
    <property type="chains" value="A=24-246"/>
</dbReference>
<dbReference type="PDB" id="3RXH">
    <property type="method" value="X-ray"/>
    <property type="resolution" value="1.70 A"/>
    <property type="chains" value="A=24-246"/>
</dbReference>
<dbReference type="PDB" id="3RXI">
    <property type="method" value="X-ray"/>
    <property type="resolution" value="1.60 A"/>
    <property type="chains" value="A=24-246"/>
</dbReference>
<dbReference type="PDB" id="3RXJ">
    <property type="method" value="X-ray"/>
    <property type="resolution" value="1.70 A"/>
    <property type="chains" value="A=24-246"/>
</dbReference>
<dbReference type="PDB" id="3RXK">
    <property type="method" value="X-ray"/>
    <property type="resolution" value="1.60 A"/>
    <property type="chains" value="A=24-246"/>
</dbReference>
<dbReference type="PDB" id="3RXL">
    <property type="method" value="X-ray"/>
    <property type="resolution" value="1.70 A"/>
    <property type="chains" value="A=24-246"/>
</dbReference>
<dbReference type="PDB" id="3RXM">
    <property type="method" value="X-ray"/>
    <property type="resolution" value="1.70 A"/>
    <property type="chains" value="A=24-246"/>
</dbReference>
<dbReference type="PDB" id="3RXO">
    <property type="method" value="X-ray"/>
    <property type="resolution" value="1.60 A"/>
    <property type="chains" value="A=24-246"/>
</dbReference>
<dbReference type="PDB" id="3RXP">
    <property type="method" value="X-ray"/>
    <property type="resolution" value="1.60 A"/>
    <property type="chains" value="A=24-246"/>
</dbReference>
<dbReference type="PDB" id="3RXQ">
    <property type="method" value="X-ray"/>
    <property type="resolution" value="1.68 A"/>
    <property type="chains" value="A=24-246"/>
</dbReference>
<dbReference type="PDB" id="3RXR">
    <property type="method" value="X-ray"/>
    <property type="resolution" value="1.72 A"/>
    <property type="chains" value="A=24-246"/>
</dbReference>
<dbReference type="PDB" id="3RXS">
    <property type="method" value="X-ray"/>
    <property type="resolution" value="1.74 A"/>
    <property type="chains" value="A=24-246"/>
</dbReference>
<dbReference type="PDB" id="3RXT">
    <property type="method" value="X-ray"/>
    <property type="resolution" value="1.70 A"/>
    <property type="chains" value="A=24-246"/>
</dbReference>
<dbReference type="PDB" id="3RXU">
    <property type="method" value="X-ray"/>
    <property type="resolution" value="1.68 A"/>
    <property type="chains" value="A=24-246"/>
</dbReference>
<dbReference type="PDB" id="3RXV">
    <property type="method" value="X-ray"/>
    <property type="resolution" value="1.70 A"/>
    <property type="chains" value="A=24-246"/>
</dbReference>
<dbReference type="PDB" id="3T25">
    <property type="method" value="X-ray"/>
    <property type="resolution" value="1.70 A"/>
    <property type="chains" value="A=24-246"/>
</dbReference>
<dbReference type="PDB" id="3T26">
    <property type="method" value="X-ray"/>
    <property type="resolution" value="1.70 A"/>
    <property type="chains" value="A=24-246"/>
</dbReference>
<dbReference type="PDB" id="3T27">
    <property type="method" value="X-ray"/>
    <property type="resolution" value="1.95 A"/>
    <property type="chains" value="A=24-246"/>
</dbReference>
<dbReference type="PDB" id="3T28">
    <property type="method" value="X-ray"/>
    <property type="resolution" value="2.80 A"/>
    <property type="chains" value="A=24-246"/>
</dbReference>
<dbReference type="PDB" id="3T29">
    <property type="method" value="X-ray"/>
    <property type="resolution" value="1.75 A"/>
    <property type="chains" value="A=24-246"/>
</dbReference>
<dbReference type="PDB" id="3TPI">
    <property type="method" value="X-ray"/>
    <property type="resolution" value="1.90 A"/>
    <property type="chains" value="Z=18-246"/>
</dbReference>
<dbReference type="PDB" id="3UNQ">
    <property type="method" value="X-ray"/>
    <property type="resolution" value="1.62 A"/>
    <property type="chains" value="A=24-246"/>
</dbReference>
<dbReference type="PDB" id="3UNS">
    <property type="method" value="X-ray"/>
    <property type="resolution" value="1.80 A"/>
    <property type="chains" value="A=24-246"/>
</dbReference>
<dbReference type="PDB" id="3UOP">
    <property type="method" value="X-ray"/>
    <property type="resolution" value="1.69 A"/>
    <property type="chains" value="A=24-246"/>
</dbReference>
<dbReference type="PDB" id="3UPE">
    <property type="method" value="X-ray"/>
    <property type="resolution" value="1.54 A"/>
    <property type="chains" value="A=24-246"/>
</dbReference>
<dbReference type="PDB" id="3UQO">
    <property type="method" value="X-ray"/>
    <property type="resolution" value="1.80 A"/>
    <property type="chains" value="A=24-246"/>
</dbReference>
<dbReference type="PDB" id="3UQV">
    <property type="method" value="X-ray"/>
    <property type="resolution" value="2.40 A"/>
    <property type="chains" value="A=24-246"/>
</dbReference>
<dbReference type="PDB" id="3UUZ">
    <property type="method" value="X-ray"/>
    <property type="resolution" value="2.10 A"/>
    <property type="chains" value="A/B=24-246"/>
</dbReference>
<dbReference type="PDB" id="3UWI">
    <property type="method" value="X-ray"/>
    <property type="resolution" value="1.43 A"/>
    <property type="chains" value="A=24-246"/>
</dbReference>
<dbReference type="PDB" id="3UY9">
    <property type="method" value="X-ray"/>
    <property type="resolution" value="3.22 A"/>
    <property type="chains" value="A/B/C/D/E/F/G/H/I/J/K/L/M/N/O/P=24-246"/>
</dbReference>
<dbReference type="PDB" id="3V0X">
    <property type="method" value="X-ray"/>
    <property type="resolution" value="1.90 A"/>
    <property type="chains" value="A=24-246"/>
</dbReference>
<dbReference type="PDB" id="3V12">
    <property type="method" value="X-ray"/>
    <property type="resolution" value="1.80 A"/>
    <property type="chains" value="A=24-246"/>
</dbReference>
<dbReference type="PDB" id="3V13">
    <property type="method" value="X-ray"/>
    <property type="resolution" value="1.63 A"/>
    <property type="chains" value="A=24-246"/>
</dbReference>
<dbReference type="PDB" id="3VEQ">
    <property type="method" value="X-ray"/>
    <property type="resolution" value="2.25 A"/>
    <property type="chains" value="B=24-246"/>
</dbReference>
<dbReference type="PDB" id="3VPK">
    <property type="method" value="X-ray"/>
    <property type="resolution" value="1.94 A"/>
    <property type="chains" value="A=24-246"/>
</dbReference>
<dbReference type="PDB" id="4AB8">
    <property type="method" value="X-ray"/>
    <property type="resolution" value="1.60 A"/>
    <property type="chains" value="A=24-246"/>
</dbReference>
<dbReference type="PDB" id="4AB9">
    <property type="method" value="X-ray"/>
    <property type="resolution" value="1.20 A"/>
    <property type="chains" value="A=24-246"/>
</dbReference>
<dbReference type="PDB" id="4ABA">
    <property type="method" value="X-ray"/>
    <property type="resolution" value="1.25 A"/>
    <property type="chains" value="A=24-246"/>
</dbReference>
<dbReference type="PDB" id="4ABB">
    <property type="method" value="X-ray"/>
    <property type="resolution" value="1.25 A"/>
    <property type="chains" value="A=24-246"/>
</dbReference>
<dbReference type="PDB" id="4ABD">
    <property type="method" value="X-ray"/>
    <property type="resolution" value="1.25 A"/>
    <property type="chains" value="A=24-246"/>
</dbReference>
<dbReference type="PDB" id="4ABE">
    <property type="method" value="X-ray"/>
    <property type="resolution" value="1.30 A"/>
    <property type="chains" value="A=24-246"/>
</dbReference>
<dbReference type="PDB" id="4ABF">
    <property type="method" value="X-ray"/>
    <property type="resolution" value="1.30 A"/>
    <property type="chains" value="A=24-246"/>
</dbReference>
<dbReference type="PDB" id="4ABG">
    <property type="method" value="X-ray"/>
    <property type="resolution" value="1.52 A"/>
    <property type="chains" value="A=24-246"/>
</dbReference>
<dbReference type="PDB" id="4ABH">
    <property type="method" value="X-ray"/>
    <property type="resolution" value="1.25 A"/>
    <property type="chains" value="A=24-246"/>
</dbReference>
<dbReference type="PDB" id="4ABI">
    <property type="method" value="X-ray"/>
    <property type="resolution" value="1.55 A"/>
    <property type="chains" value="A=24-246"/>
</dbReference>
<dbReference type="PDB" id="4ABJ">
    <property type="method" value="X-ray"/>
    <property type="resolution" value="1.45 A"/>
    <property type="chains" value="A=24-246"/>
</dbReference>
<dbReference type="PDB" id="4AOQ">
    <property type="method" value="X-ray"/>
    <property type="resolution" value="2.00 A"/>
    <property type="chains" value="A/B/C=24-246"/>
</dbReference>
<dbReference type="PDB" id="4AOR">
    <property type="method" value="X-ray"/>
    <property type="resolution" value="1.70 A"/>
    <property type="chains" value="A/B/C=24-246"/>
</dbReference>
<dbReference type="PDB" id="4B1T">
    <property type="method" value="X-ray"/>
    <property type="resolution" value="1.78 A"/>
    <property type="chains" value="A/C=24-246"/>
</dbReference>
<dbReference type="PDB" id="4B2A">
    <property type="method" value="X-ray"/>
    <property type="resolution" value="1.89 A"/>
    <property type="chains" value="A/C=24-246"/>
</dbReference>
<dbReference type="PDB" id="4B2B">
    <property type="method" value="X-ray"/>
    <property type="resolution" value="1.36 A"/>
    <property type="chains" value="A/C=24-246"/>
</dbReference>
<dbReference type="PDB" id="4B2C">
    <property type="method" value="X-ray"/>
    <property type="resolution" value="1.43 A"/>
    <property type="chains" value="A/C=24-246"/>
</dbReference>
<dbReference type="PDB" id="4GUX">
    <property type="method" value="X-ray"/>
    <property type="resolution" value="1.80 A"/>
    <property type="chains" value="A/B/C=1-246"/>
</dbReference>
<dbReference type="PDB" id="4HGC">
    <property type="method" value="X-ray"/>
    <property type="resolution" value="1.29 A"/>
    <property type="chains" value="A=24-246"/>
</dbReference>
<dbReference type="PDB" id="4I8G">
    <property type="method" value="X-ray"/>
    <property type="resolution" value="0.80 A"/>
    <property type="chains" value="A=24-246"/>
</dbReference>
<dbReference type="PDB" id="4I8H">
    <property type="method" value="X-ray"/>
    <property type="resolution" value="0.75 A"/>
    <property type="chains" value="A=24-246"/>
</dbReference>
<dbReference type="PDB" id="4I8J">
    <property type="method" value="X-ray"/>
    <property type="resolution" value="0.87 A"/>
    <property type="chains" value="A=24-246"/>
</dbReference>
<dbReference type="PDB" id="4I8K">
    <property type="method" value="X-ray"/>
    <property type="resolution" value="0.85 A"/>
    <property type="chains" value="A=24-246"/>
</dbReference>
<dbReference type="PDB" id="4I8L">
    <property type="method" value="X-ray"/>
    <property type="resolution" value="0.87 A"/>
    <property type="chains" value="A=24-246"/>
</dbReference>
<dbReference type="PDB" id="4J2Y">
    <property type="method" value="X-ray"/>
    <property type="resolution" value="2.00 A"/>
    <property type="chains" value="B=24-246"/>
</dbReference>
<dbReference type="PDB" id="4KTS">
    <property type="method" value="X-ray"/>
    <property type="resolution" value="1.30 A"/>
    <property type="chains" value="A=24-246"/>
</dbReference>
<dbReference type="PDB" id="4KTU">
    <property type="method" value="X-ray"/>
    <property type="resolution" value="1.35 A"/>
    <property type="chains" value="A=24-246"/>
</dbReference>
<dbReference type="PDB" id="4MTB">
    <property type="method" value="X-ray"/>
    <property type="resolution" value="1.22 A"/>
    <property type="chains" value="A=24-246"/>
</dbReference>
<dbReference type="PDB" id="4NCY">
    <property type="method" value="X-ray"/>
    <property type="resolution" value="1.42 A"/>
    <property type="chains" value="A=24-246"/>
</dbReference>
<dbReference type="PDB" id="4NIV">
    <property type="method" value="X-ray"/>
    <property type="resolution" value="1.00 A"/>
    <property type="chains" value="A=24-246"/>
</dbReference>
<dbReference type="PDB" id="4NIW">
    <property type="method" value="X-ray"/>
    <property type="resolution" value="1.31 A"/>
    <property type="chains" value="A=24-246"/>
</dbReference>
<dbReference type="PDB" id="4NIX">
    <property type="method" value="X-ray"/>
    <property type="resolution" value="1.30 A"/>
    <property type="chains" value="A=24-246"/>
</dbReference>
<dbReference type="PDB" id="4NIY">
    <property type="method" value="X-ray"/>
    <property type="resolution" value="2.84 A"/>
    <property type="chains" value="A/B/C/D=24-246"/>
</dbReference>
<dbReference type="PDB" id="4TPI">
    <property type="method" value="X-ray"/>
    <property type="resolution" value="2.20 A"/>
    <property type="chains" value="Z=18-246"/>
</dbReference>
<dbReference type="PDB" id="4TPY">
    <property type="method" value="X-ray"/>
    <property type="resolution" value="1.30 A"/>
    <property type="chains" value="A=24-246"/>
</dbReference>
<dbReference type="PDB" id="4U2W">
    <property type="method" value="X-ray"/>
    <property type="resolution" value="1.00 A"/>
    <property type="chains" value="A=24-246"/>
</dbReference>
<dbReference type="PDB" id="4XOJ">
    <property type="method" value="X-ray"/>
    <property type="resolution" value="0.91 A"/>
    <property type="chains" value="A=1-246"/>
</dbReference>
<dbReference type="PDB" id="4Y0Y">
    <property type="method" value="X-ray"/>
    <property type="resolution" value="1.25 A"/>
    <property type="chains" value="E=24-246"/>
</dbReference>
<dbReference type="PDB" id="4Y0Z">
    <property type="method" value="X-ray"/>
    <property type="resolution" value="1.37 A"/>
    <property type="chains" value="E=24-246"/>
</dbReference>
<dbReference type="PDB" id="4Y10">
    <property type="method" value="X-ray"/>
    <property type="resolution" value="1.37 A"/>
    <property type="chains" value="E=24-246"/>
</dbReference>
<dbReference type="PDB" id="4Y11">
    <property type="method" value="X-ray"/>
    <property type="resolution" value="1.30 A"/>
    <property type="chains" value="E=24-246"/>
</dbReference>
<dbReference type="PDB" id="4YTA">
    <property type="method" value="X-ray"/>
    <property type="resolution" value="1.20 A"/>
    <property type="chains" value="A=24-246"/>
</dbReference>
<dbReference type="PDB" id="5EG4">
    <property type="method" value="X-ray"/>
    <property type="resolution" value="1.32 A"/>
    <property type="chains" value="A=24-246"/>
</dbReference>
<dbReference type="PDB" id="5F6M">
    <property type="method" value="X-ray"/>
    <property type="resolution" value="1.10 A"/>
    <property type="chains" value="A=24-246"/>
</dbReference>
<dbReference type="PDB" id="5FXL">
    <property type="method" value="X-ray"/>
    <property type="resolution" value="1.78 A"/>
    <property type="chains" value="A=1-246"/>
</dbReference>
<dbReference type="PDB" id="5GIB">
    <property type="method" value="X-ray"/>
    <property type="resolution" value="2.70 A"/>
    <property type="chains" value="A/B=24-246"/>
</dbReference>
<dbReference type="PDB" id="5GXP">
    <property type="method" value="X-ray"/>
    <property type="resolution" value="2.80 A"/>
    <property type="chains" value="A/B=24-246"/>
</dbReference>
<dbReference type="PDB" id="5JYI">
    <property type="method" value="X-ray"/>
    <property type="resolution" value="1.91 A"/>
    <property type="chains" value="A=1-246"/>
</dbReference>
<dbReference type="PDB" id="5K7R">
    <property type="method" value="EM"/>
    <property type="resolution" value="1.70 A"/>
    <property type="chains" value="A=24-246"/>
</dbReference>
<dbReference type="PDB" id="5LGO">
    <property type="method" value="X-ray"/>
    <property type="resolution" value="1.12 A"/>
    <property type="chains" value="A=24-246"/>
</dbReference>
<dbReference type="PDB" id="5LH4">
    <property type="method" value="X-ray"/>
    <property type="resolution" value="1.37 A"/>
    <property type="chains" value="A=24-246"/>
</dbReference>
<dbReference type="PDB" id="5LH8">
    <property type="method" value="X-ray"/>
    <property type="resolution" value="1.54 A"/>
    <property type="chains" value="A=24-246"/>
</dbReference>
<dbReference type="PDB" id="5MN1">
    <property type="method" value="X-ray"/>
    <property type="resolution" value="0.79 A"/>
    <property type="chains" value="A=24-246"/>
</dbReference>
<dbReference type="PDB" id="5MNA">
    <property type="method" value="X-ray"/>
    <property type="resolution" value="1.44 A"/>
    <property type="chains" value="A=24-246"/>
</dbReference>
<dbReference type="PDB" id="5MNB">
    <property type="method" value="X-ray"/>
    <property type="resolution" value="0.94 A"/>
    <property type="chains" value="A=24-246"/>
</dbReference>
<dbReference type="PDB" id="5MNC">
    <property type="method" value="X-ray"/>
    <property type="resolution" value="0.92 A"/>
    <property type="chains" value="A=24-246"/>
</dbReference>
<dbReference type="PDB" id="5MNE">
    <property type="method" value="X-ray"/>
    <property type="resolution" value="1.01 A"/>
    <property type="chains" value="A=24-246"/>
</dbReference>
<dbReference type="PDB" id="5MNF">
    <property type="method" value="X-ray"/>
    <property type="resolution" value="0.99 A"/>
    <property type="chains" value="A=24-246"/>
</dbReference>
<dbReference type="PDB" id="5MNG">
    <property type="method" value="X-ray"/>
    <property type="resolution" value="0.86 A"/>
    <property type="chains" value="A=24-246"/>
</dbReference>
<dbReference type="PDB" id="5MNH">
    <property type="method" value="X-ray"/>
    <property type="resolution" value="0.93 A"/>
    <property type="chains" value="A=24-246"/>
</dbReference>
<dbReference type="PDB" id="5MNK">
    <property type="method" value="X-ray"/>
    <property type="resolution" value="0.80 A"/>
    <property type="chains" value="A=24-246"/>
</dbReference>
<dbReference type="PDB" id="5MNL">
    <property type="method" value="X-ray"/>
    <property type="resolution" value="1.04 A"/>
    <property type="chains" value="A=24-246"/>
</dbReference>
<dbReference type="PDB" id="5MNM">
    <property type="method" value="X-ray"/>
    <property type="resolution" value="0.98 A"/>
    <property type="chains" value="A=24-246"/>
</dbReference>
<dbReference type="PDB" id="5MNN">
    <property type="method" value="X-ray"/>
    <property type="resolution" value="0.86 A"/>
    <property type="chains" value="A=24-246"/>
</dbReference>
<dbReference type="PDB" id="5MNO">
    <property type="method" value="X-ray"/>
    <property type="resolution" value="0.96 A"/>
    <property type="chains" value="A=24-246"/>
</dbReference>
<dbReference type="PDB" id="5MNP">
    <property type="method" value="X-ray"/>
    <property type="resolution" value="1.01 A"/>
    <property type="chains" value="A=24-246"/>
</dbReference>
<dbReference type="PDB" id="5MNQ">
    <property type="method" value="X-ray"/>
    <property type="resolution" value="1.34 A"/>
    <property type="chains" value="A=24-246"/>
</dbReference>
<dbReference type="PDB" id="5MNX">
    <property type="method" value="Neutron"/>
    <property type="resolution" value="1.42 A"/>
    <property type="chains" value="A=24-246"/>
</dbReference>
<dbReference type="PDB" id="5MNY">
    <property type="method" value="Neutron"/>
    <property type="resolution" value="1.43 A"/>
    <property type="chains" value="A=24-246"/>
</dbReference>
<dbReference type="PDB" id="5MNZ">
    <property type="method" value="Neutron"/>
    <property type="resolution" value="1.45 A"/>
    <property type="chains" value="A=24-246"/>
</dbReference>
<dbReference type="PDB" id="5MO0">
    <property type="method" value="Neutron"/>
    <property type="resolution" value="1.50 A"/>
    <property type="chains" value="A=24-246"/>
</dbReference>
<dbReference type="PDB" id="5MO1">
    <property type="method" value="Neutron"/>
    <property type="resolution" value="1.49 A"/>
    <property type="chains" value="A=24-246"/>
</dbReference>
<dbReference type="PDB" id="5MO2">
    <property type="method" value="Neutron"/>
    <property type="resolution" value="1.50 A"/>
    <property type="chains" value="A=24-246"/>
</dbReference>
<dbReference type="PDB" id="5MON">
    <property type="method" value="Other"/>
    <property type="resolution" value="0.94 A"/>
    <property type="chains" value="A=24-246"/>
</dbReference>
<dbReference type="PDB" id="5MOO">
    <property type="method" value="Other"/>
    <property type="resolution" value="1.44 A"/>
    <property type="chains" value="A=24-246"/>
</dbReference>
<dbReference type="PDB" id="5MOP">
    <property type="method" value="Other"/>
    <property type="resolution" value="0.99 A"/>
    <property type="chains" value="A=24-246"/>
</dbReference>
<dbReference type="PDB" id="5MOQ">
    <property type="method" value="Other"/>
    <property type="resolution" value="0.93 A"/>
    <property type="chains" value="A=24-246"/>
</dbReference>
<dbReference type="PDB" id="5MOR">
    <property type="method" value="Other"/>
    <property type="resolution" value="0.98 A"/>
    <property type="chains" value="A=24-246"/>
</dbReference>
<dbReference type="PDB" id="5MOS">
    <property type="method" value="Other"/>
    <property type="resolution" value="0.96 A"/>
    <property type="chains" value="A=24-246"/>
</dbReference>
<dbReference type="PDB" id="5PTP">
    <property type="method" value="X-ray"/>
    <property type="resolution" value="1.34 A"/>
    <property type="chains" value="A=24-246"/>
</dbReference>
<dbReference type="PDB" id="5T3H">
    <property type="method" value="X-ray"/>
    <property type="resolution" value="1.55 A"/>
    <property type="chains" value="A=24-246"/>
</dbReference>
<dbReference type="PDB" id="6AVL">
    <property type="method" value="X-ray"/>
    <property type="resolution" value="2.00 A"/>
    <property type="chains" value="A=24-246"/>
</dbReference>
<dbReference type="PDB" id="6B6N">
    <property type="method" value="X-ray"/>
    <property type="resolution" value="2.00 A"/>
    <property type="chains" value="A=24-246"/>
</dbReference>
<dbReference type="PDB" id="6B6O">
    <property type="method" value="X-ray"/>
    <property type="resolution" value="2.40 A"/>
    <property type="chains" value="A=24-246"/>
</dbReference>
<dbReference type="PDB" id="6B6P">
    <property type="method" value="X-ray"/>
    <property type="resolution" value="2.00 A"/>
    <property type="chains" value="A=24-246"/>
</dbReference>
<dbReference type="PDB" id="6B6Q">
    <property type="method" value="X-ray"/>
    <property type="resolution" value="2.00 A"/>
    <property type="chains" value="A=24-246"/>
</dbReference>
<dbReference type="PDB" id="6B6R">
    <property type="method" value="X-ray"/>
    <property type="resolution" value="2.00 A"/>
    <property type="chains" value="A=24-246"/>
</dbReference>
<dbReference type="PDB" id="6B6S">
    <property type="method" value="X-ray"/>
    <property type="resolution" value="2.00 A"/>
    <property type="chains" value="A=24-246"/>
</dbReference>
<dbReference type="PDB" id="6B6T">
    <property type="method" value="X-ray"/>
    <property type="resolution" value="2.00 A"/>
    <property type="chains" value="A=24-246"/>
</dbReference>
<dbReference type="PDB" id="6BFP">
    <property type="method" value="X-ray"/>
    <property type="resolution" value="1.29 A"/>
    <property type="chains" value="A=24-246"/>
</dbReference>
<dbReference type="PDB" id="6BVH">
    <property type="method" value="X-ray"/>
    <property type="resolution" value="1.93 A"/>
    <property type="chains" value="A=24-246"/>
</dbReference>
<dbReference type="PDB" id="6DWF">
    <property type="method" value="X-ray"/>
    <property type="resolution" value="1.94 A"/>
    <property type="chains" value="A/B/C/D/E/F=24-246"/>
</dbReference>
<dbReference type="PDB" id="6DWH">
    <property type="method" value="X-ray"/>
    <property type="resolution" value="2.00 A"/>
    <property type="chains" value="A/B/C/D/E/F=24-246"/>
</dbReference>
<dbReference type="PDB" id="6DWR">
    <property type="method" value="X-ray"/>
    <property type="resolution" value="1.32 A"/>
    <property type="chains" value="A=24-246"/>
</dbReference>
<dbReference type="PDB" id="6DWU">
    <property type="method" value="X-ray"/>
    <property type="resolution" value="3.96 A"/>
    <property type="chains" value="AA/AC/AE/AG/AI/AK/AM/AO/AQ/AS/AU/BA/BC/BE/BG/BI/BK/BM/BO/BQ/BS/BU/CA/CC/CE/CG/CI/CK/CM/CO=24-246"/>
</dbReference>
<dbReference type="PDB" id="6DZF">
    <property type="method" value="X-ray"/>
    <property type="resolution" value="2.20 A"/>
    <property type="chains" value="A=24-246"/>
</dbReference>
<dbReference type="PDB" id="6E5M">
    <property type="method" value="X-ray"/>
    <property type="resolution" value="1.61 A"/>
    <property type="chains" value="A=24-246"/>
</dbReference>
<dbReference type="PDB" id="6EAT">
    <property type="method" value="X-ray"/>
    <property type="resolution" value="1.15 A"/>
    <property type="chains" value="A=24-246"/>
</dbReference>
<dbReference type="PDB" id="6EAU">
    <property type="method" value="X-ray"/>
    <property type="resolution" value="1.18 A"/>
    <property type="chains" value="A=24-246"/>
</dbReference>
<dbReference type="PDB" id="6EAV">
    <property type="method" value="X-ray"/>
    <property type="resolution" value="1.39 A"/>
    <property type="chains" value="A=24-246"/>
</dbReference>
<dbReference type="PDB" id="6EAW">
    <property type="method" value="X-ray"/>
    <property type="resolution" value="1.29 A"/>
    <property type="chains" value="A=24-246"/>
</dbReference>
<dbReference type="PDB" id="6EAX">
    <property type="method" value="X-ray"/>
    <property type="resolution" value="1.19 A"/>
    <property type="chains" value="A=24-246"/>
</dbReference>
<dbReference type="PDB" id="6FID">
    <property type="method" value="X-ray"/>
    <property type="resolution" value="2.20 A"/>
    <property type="chains" value="A=24-246"/>
</dbReference>
<dbReference type="PDB" id="6MRQ">
    <property type="method" value="X-ray"/>
    <property type="resolution" value="1.29 A"/>
    <property type="chains" value="A=24-246"/>
</dbReference>
<dbReference type="PDB" id="6QIH">
    <property type="method" value="X-ray"/>
    <property type="resolution" value="1.42 A"/>
    <property type="chains" value="A=24-246"/>
</dbReference>
<dbReference type="PDB" id="6QL0">
    <property type="method" value="X-ray"/>
    <property type="resolution" value="1.63 A"/>
    <property type="chains" value="A=1-246"/>
</dbReference>
<dbReference type="PDB" id="6SUX">
    <property type="method" value="X-ray"/>
    <property type="resolution" value="1.16 A"/>
    <property type="chains" value="A=24-246"/>
</dbReference>
<dbReference type="PDB" id="6SV0">
    <property type="method" value="X-ray"/>
    <property type="resolution" value="1.16 A"/>
    <property type="chains" value="A=24-246"/>
</dbReference>
<dbReference type="PDB" id="6SV6">
    <property type="method" value="X-ray"/>
    <property type="resolution" value="1.15 A"/>
    <property type="chains" value="A=24-246"/>
</dbReference>
<dbReference type="PDB" id="6SV8">
    <property type="method" value="X-ray"/>
    <property type="resolution" value="1.15 A"/>
    <property type="chains" value="A=24-246"/>
</dbReference>
<dbReference type="PDB" id="6SV9">
    <property type="method" value="X-ray"/>
    <property type="resolution" value="1.15 A"/>
    <property type="chains" value="A=24-246"/>
</dbReference>
<dbReference type="PDB" id="6SVB">
    <property type="method" value="X-ray"/>
    <property type="resolution" value="1.15 A"/>
    <property type="chains" value="A=24-246"/>
</dbReference>
<dbReference type="PDB" id="6SVD">
    <property type="method" value="X-ray"/>
    <property type="resolution" value="1.15 A"/>
    <property type="chains" value="A=24-246"/>
</dbReference>
<dbReference type="PDB" id="6SVG">
    <property type="method" value="X-ray"/>
    <property type="resolution" value="1.16 A"/>
    <property type="chains" value="A=24-246"/>
</dbReference>
<dbReference type="PDB" id="6SVI">
    <property type="method" value="X-ray"/>
    <property type="resolution" value="1.16 A"/>
    <property type="chains" value="A=24-246"/>
</dbReference>
<dbReference type="PDB" id="6SVJ">
    <property type="method" value="X-ray"/>
    <property type="resolution" value="1.16 A"/>
    <property type="chains" value="A=24-246"/>
</dbReference>
<dbReference type="PDB" id="6SVN">
    <property type="method" value="X-ray"/>
    <property type="resolution" value="1.16 A"/>
    <property type="chains" value="A=24-246"/>
</dbReference>
<dbReference type="PDB" id="6SVR">
    <property type="method" value="X-ray"/>
    <property type="resolution" value="1.16 A"/>
    <property type="chains" value="A=24-246"/>
</dbReference>
<dbReference type="PDB" id="6SVU">
    <property type="method" value="X-ray"/>
    <property type="resolution" value="1.15 A"/>
    <property type="chains" value="A=24-246"/>
</dbReference>
<dbReference type="PDB" id="6SVV">
    <property type="method" value="X-ray"/>
    <property type="resolution" value="1.15 A"/>
    <property type="chains" value="A=24-246"/>
</dbReference>
<dbReference type="PDB" id="6SVW">
    <property type="method" value="X-ray"/>
    <property type="resolution" value="1.16 A"/>
    <property type="chains" value="A=24-246"/>
</dbReference>
<dbReference type="PDB" id="6SVX">
    <property type="method" value="X-ray"/>
    <property type="resolution" value="1.16 A"/>
    <property type="chains" value="A=24-246"/>
</dbReference>
<dbReference type="PDB" id="6SVZ">
    <property type="method" value="X-ray"/>
    <property type="resolution" value="1.15 A"/>
    <property type="chains" value="A=24-246"/>
</dbReference>
<dbReference type="PDB" id="6SW0">
    <property type="method" value="X-ray"/>
    <property type="resolution" value="1.15 A"/>
    <property type="chains" value="A=24-246"/>
</dbReference>
<dbReference type="PDB" id="6SWV">
    <property type="method" value="X-ray"/>
    <property type="resolution" value="1.43 A"/>
    <property type="chains" value="AAA=1-246"/>
</dbReference>
<dbReference type="PDB" id="6SY3">
    <property type="method" value="X-ray"/>
    <property type="resolution" value="0.95 A"/>
    <property type="chains" value="A=1-246"/>
</dbReference>
<dbReference type="PDB" id="6T0M">
    <property type="method" value="X-ray"/>
    <property type="resolution" value="1.51 A"/>
    <property type="chains" value="A=1-246"/>
</dbReference>
<dbReference type="PDB" id="6T0P">
    <property type="method" value="X-ray"/>
    <property type="resolution" value="1.19 A"/>
    <property type="chains" value="A=1-246"/>
</dbReference>
<dbReference type="PDB" id="6T5W">
    <property type="method" value="X-ray"/>
    <property type="resolution" value="1.13 A"/>
    <property type="chains" value="A=1-246"/>
</dbReference>
<dbReference type="PDB" id="6T9U">
    <property type="method" value="X-ray"/>
    <property type="resolution" value="1.07 A"/>
    <property type="chains" value="A=1-246"/>
</dbReference>
<dbReference type="PDB" id="6T9V">
    <property type="method" value="X-ray"/>
    <property type="resolution" value="1.13 A"/>
    <property type="chains" value="A=1-246"/>
</dbReference>
<dbReference type="PDB" id="6U22">
    <property type="method" value="X-ray"/>
    <property type="resolution" value="1.42 A"/>
    <property type="chains" value="A=24-246"/>
</dbReference>
<dbReference type="PDB" id="6VXY">
    <property type="method" value="X-ray"/>
    <property type="resolution" value="1.40 A"/>
    <property type="chains" value="A=24-246"/>
</dbReference>
<dbReference type="PDB" id="6XYG">
    <property type="method" value="X-ray"/>
    <property type="resolution" value="1.50 A"/>
    <property type="chains" value="A=24-246"/>
</dbReference>
<dbReference type="PDB" id="6XYK">
    <property type="method" value="X-ray"/>
    <property type="resolution" value="1.50 A"/>
    <property type="chains" value="A=24-246"/>
</dbReference>
<dbReference type="PDB" id="6YDY">
    <property type="method" value="X-ray"/>
    <property type="resolution" value="1.45 A"/>
    <property type="chains" value="A=1-246"/>
</dbReference>
<dbReference type="PDB" id="6YIS">
    <property type="method" value="X-ray"/>
    <property type="resolution" value="1.19 A"/>
    <property type="chains" value="A=1-246"/>
</dbReference>
<dbReference type="PDB" id="6YIT">
    <property type="method" value="X-ray"/>
    <property type="resolution" value="1.25 A"/>
    <property type="chains" value="A=24-246"/>
</dbReference>
<dbReference type="PDB" id="6YIU">
    <property type="method" value="X-ray"/>
    <property type="resolution" value="1.36 A"/>
    <property type="chains" value="A=24-246"/>
</dbReference>
<dbReference type="PDB" id="6YIV">
    <property type="method" value="X-ray"/>
    <property type="resolution" value="0.95 A"/>
    <property type="chains" value="A=24-246"/>
</dbReference>
<dbReference type="PDB" id="6YIW">
    <property type="method" value="X-ray"/>
    <property type="resolution" value="0.97 A"/>
    <property type="chains" value="A=24-246"/>
</dbReference>
<dbReference type="PDB" id="6YIX">
    <property type="method" value="X-ray"/>
    <property type="resolution" value="1.31 A"/>
    <property type="chains" value="A=24-246"/>
</dbReference>
<dbReference type="PDB" id="6YIY">
    <property type="method" value="X-ray"/>
    <property type="resolution" value="1.11 A"/>
    <property type="chains" value="A=24-246"/>
</dbReference>
<dbReference type="PDB" id="6YZA">
    <property type="method" value="X-ray"/>
    <property type="resolution" value="1.30 A"/>
    <property type="chains" value="A=24-246"/>
</dbReference>
<dbReference type="PDB" id="6YZC">
    <property type="method" value="X-ray"/>
    <property type="resolution" value="1.42 A"/>
    <property type="chains" value="A=24-246"/>
</dbReference>
<dbReference type="PDB" id="6ZFJ">
    <property type="method" value="X-ray"/>
    <property type="resolution" value="1.00 A"/>
    <property type="chains" value="A=24-246"/>
</dbReference>
<dbReference type="PDB" id="6ZFK">
    <property type="method" value="X-ray"/>
    <property type="resolution" value="1.10 A"/>
    <property type="chains" value="A=24-246"/>
</dbReference>
<dbReference type="PDB" id="6ZQ2">
    <property type="method" value="X-ray"/>
    <property type="resolution" value="1.29 A"/>
    <property type="chains" value="A=24-246"/>
</dbReference>
<dbReference type="PDB" id="7AL8">
    <property type="method" value="X-ray"/>
    <property type="resolution" value="2.85 A"/>
    <property type="chains" value="B/E/H/K/N/Q/T/U=24-246"/>
</dbReference>
<dbReference type="PDB" id="7AYS">
    <property type="method" value="X-ray"/>
    <property type="resolution" value="2.10 A"/>
    <property type="chains" value="A=24-246"/>
</dbReference>
<dbReference type="PDB" id="7BRV">
    <property type="method" value="X-ray"/>
    <property type="resolution" value="1.55 A"/>
    <property type="chains" value="A=24-246"/>
</dbReference>
<dbReference type="PDB" id="7BRW">
    <property type="method" value="X-ray"/>
    <property type="resolution" value="1.60 A"/>
    <property type="chains" value="A=24-246"/>
</dbReference>
<dbReference type="PDB" id="7BRX">
    <property type="method" value="X-ray"/>
    <property type="resolution" value="1.35 A"/>
    <property type="chains" value="A=24-246"/>
</dbReference>
<dbReference type="PDB" id="7BRY">
    <property type="method" value="X-ray"/>
    <property type="resolution" value="1.65 A"/>
    <property type="chains" value="A=24-246"/>
</dbReference>
<dbReference type="PDB" id="7BRZ">
    <property type="method" value="X-ray"/>
    <property type="resolution" value="1.30 A"/>
    <property type="chains" value="A=24-246"/>
</dbReference>
<dbReference type="PDB" id="7BS0">
    <property type="method" value="X-ray"/>
    <property type="resolution" value="1.85 A"/>
    <property type="chains" value="A=24-246"/>
</dbReference>
<dbReference type="PDB" id="7BS1">
    <property type="method" value="X-ray"/>
    <property type="resolution" value="1.50 A"/>
    <property type="chains" value="A=24-246"/>
</dbReference>
<dbReference type="PDB" id="7BS2">
    <property type="method" value="X-ray"/>
    <property type="resolution" value="1.80 A"/>
    <property type="chains" value="A=24-246"/>
</dbReference>
<dbReference type="PDB" id="7BS3">
    <property type="method" value="X-ray"/>
    <property type="resolution" value="1.28 A"/>
    <property type="chains" value="A=24-246"/>
</dbReference>
<dbReference type="PDB" id="7BS4">
    <property type="method" value="X-ray"/>
    <property type="resolution" value="1.04 A"/>
    <property type="chains" value="A=24-246"/>
</dbReference>
<dbReference type="PDB" id="7BS5">
    <property type="method" value="X-ray"/>
    <property type="resolution" value="1.17 A"/>
    <property type="chains" value="A=24-246"/>
</dbReference>
<dbReference type="PDB" id="7BS6">
    <property type="method" value="X-ray"/>
    <property type="resolution" value="1.04 A"/>
    <property type="chains" value="A=24-246"/>
</dbReference>
<dbReference type="PDB" id="7BS7">
    <property type="method" value="X-ray"/>
    <property type="resolution" value="1.04 A"/>
    <property type="chains" value="A=24-246"/>
</dbReference>
<dbReference type="PDB" id="7BS8">
    <property type="method" value="X-ray"/>
    <property type="resolution" value="1.37 A"/>
    <property type="chains" value="A=24-246"/>
</dbReference>
<dbReference type="PDB" id="7BS9">
    <property type="method" value="X-ray"/>
    <property type="resolution" value="1.05 A"/>
    <property type="chains" value="A=24-246"/>
</dbReference>
<dbReference type="PDB" id="7BSA">
    <property type="method" value="X-ray"/>
    <property type="resolution" value="1.22 A"/>
    <property type="chains" value="A=24-246"/>
</dbReference>
<dbReference type="PDB" id="7JR1">
    <property type="method" value="X-ray"/>
    <property type="resolution" value="2.05 A"/>
    <property type="chains" value="A/B/C/D/E/F=24-246"/>
</dbReference>
<dbReference type="PDB" id="7JR2">
    <property type="method" value="X-ray"/>
    <property type="resolution" value="1.85 A"/>
    <property type="chains" value="A/B/C/D/E/F=24-246"/>
</dbReference>
<dbReference type="PDB" id="7JWX">
    <property type="method" value="X-ray"/>
    <property type="resolution" value="2.38 A"/>
    <property type="chains" value="A/B/C/D=24-246"/>
</dbReference>
<dbReference type="PDB" id="7PH1">
    <property type="method" value="X-ray"/>
    <property type="resolution" value="1.18 A"/>
    <property type="chains" value="E=24-246"/>
</dbReference>
<dbReference type="PDB" id="7Q0W">
    <property type="method" value="X-ray"/>
    <property type="resolution" value="1.20 A"/>
    <property type="chains" value="A=24-246"/>
</dbReference>
<dbReference type="PDB" id="7Q0X">
    <property type="method" value="X-ray"/>
    <property type="resolution" value="1.09 A"/>
    <property type="chains" value="A=24-246"/>
</dbReference>
<dbReference type="PDB" id="7VO7">
    <property type="method" value="X-ray"/>
    <property type="resolution" value="2.25 A"/>
    <property type="chains" value="A/B=24-246"/>
</dbReference>
<dbReference type="PDB" id="7WA0">
    <property type="method" value="X-ray"/>
    <property type="resolution" value="1.77 A"/>
    <property type="chains" value="A=24-246"/>
</dbReference>
<dbReference type="PDB" id="7WA2">
    <property type="method" value="X-ray"/>
    <property type="resolution" value="1.52 A"/>
    <property type="chains" value="A=24-246"/>
</dbReference>
<dbReference type="PDB" id="7WB6">
    <property type="method" value="X-ray"/>
    <property type="resolution" value="1.48 A"/>
    <property type="chains" value="A=24-246"/>
</dbReference>
<dbReference type="PDB" id="7WB7">
    <property type="method" value="X-ray"/>
    <property type="resolution" value="1.45 A"/>
    <property type="chains" value="A=24-246"/>
</dbReference>
<dbReference type="PDB" id="7WB8">
    <property type="method" value="X-ray"/>
    <property type="resolution" value="1.38 A"/>
    <property type="chains" value="A=24-246"/>
</dbReference>
<dbReference type="PDB" id="7WB9">
    <property type="method" value="X-ray"/>
    <property type="resolution" value="1.56 A"/>
    <property type="chains" value="A=24-246"/>
</dbReference>
<dbReference type="PDB" id="7WBA">
    <property type="method" value="X-ray"/>
    <property type="resolution" value="1.45 A"/>
    <property type="chains" value="A=24-246"/>
</dbReference>
<dbReference type="PDB" id="7Z25">
    <property type="method" value="X-ray"/>
    <property type="resolution" value="1.35 A"/>
    <property type="chains" value="A=24-246"/>
</dbReference>
<dbReference type="PDB" id="7Z2I">
    <property type="method" value="X-ray"/>
    <property type="resolution" value="1.09 A"/>
    <property type="chains" value="A=24-246"/>
</dbReference>
<dbReference type="PDB" id="8ADT">
    <property type="method" value="X-ray"/>
    <property type="resolution" value="1.40 A"/>
    <property type="chains" value="A=24-246"/>
</dbReference>
<dbReference type="PDB" id="8IYV">
    <property type="method" value="X-ray"/>
    <property type="resolution" value="2.10 A"/>
    <property type="chains" value="A=24-246"/>
</dbReference>
<dbReference type="PDB" id="8IZH">
    <property type="method" value="X-ray"/>
    <property type="resolution" value="2.30 A"/>
    <property type="chains" value="A=24-246"/>
</dbReference>
<dbReference type="PDB" id="8IZI">
    <property type="method" value="X-ray"/>
    <property type="resolution" value="2.10 A"/>
    <property type="chains" value="A=24-246"/>
</dbReference>
<dbReference type="PDB" id="8IZK">
    <property type="method" value="X-ray"/>
    <property type="resolution" value="2.00 A"/>
    <property type="chains" value="A=24-246"/>
</dbReference>
<dbReference type="PDB" id="8KDU">
    <property type="method" value="X-ray"/>
    <property type="resolution" value="2.30 A"/>
    <property type="chains" value="A=24-246"/>
</dbReference>
<dbReference type="PDB" id="8UO7">
    <property type="method" value="X-ray"/>
    <property type="resolution" value="2.20 A"/>
    <property type="chains" value="A=24-246"/>
</dbReference>
<dbReference type="PDB" id="8UTL">
    <property type="method" value="X-ray"/>
    <property type="resolution" value="1.56 A"/>
    <property type="chains" value="A=24-246"/>
</dbReference>
<dbReference type="PDB" id="8WK1">
    <property type="method" value="X-ray"/>
    <property type="resolution" value="2.00 A"/>
    <property type="chains" value="A/C=24-246"/>
</dbReference>
<dbReference type="PDB" id="8XNI">
    <property type="method" value="X-ray"/>
    <property type="resolution" value="2.30 A"/>
    <property type="chains" value="A=1-246"/>
</dbReference>
<dbReference type="PDB" id="8XNJ">
    <property type="method" value="X-ray"/>
    <property type="resolution" value="2.40 A"/>
    <property type="chains" value="A=24-246"/>
</dbReference>
<dbReference type="PDB" id="9AVX">
    <property type="method" value="X-ray"/>
    <property type="resolution" value="1.50 A"/>
    <property type="chains" value="A=24-246"/>
</dbReference>
<dbReference type="PDB" id="9AVY">
    <property type="method" value="X-ray"/>
    <property type="resolution" value="1.50 A"/>
    <property type="chains" value="A=24-246"/>
</dbReference>
<dbReference type="PDB" id="9AVZ">
    <property type="method" value="X-ray"/>
    <property type="resolution" value="1.50 A"/>
    <property type="chains" value="A=24-246"/>
</dbReference>
<dbReference type="PDB" id="9AW0">
    <property type="method" value="X-ray"/>
    <property type="resolution" value="1.50 A"/>
    <property type="chains" value="A=24-246"/>
</dbReference>
<dbReference type="PDB" id="9AW1">
    <property type="method" value="X-ray"/>
    <property type="resolution" value="1.50 A"/>
    <property type="chains" value="A=24-246"/>
</dbReference>
<dbReference type="PDB" id="9AW2">
    <property type="method" value="X-ray"/>
    <property type="resolution" value="1.50 A"/>
    <property type="chains" value="A=24-246"/>
</dbReference>
<dbReference type="PDB" id="9AW4">
    <property type="method" value="X-ray"/>
    <property type="resolution" value="1.50 A"/>
    <property type="chains" value="A=24-246"/>
</dbReference>
<dbReference type="PDB" id="9AW8">
    <property type="method" value="X-ray"/>
    <property type="resolution" value="1.50 A"/>
    <property type="chains" value="A=24-246"/>
</dbReference>
<dbReference type="PDB" id="9AW9">
    <property type="method" value="X-ray"/>
    <property type="resolution" value="1.50 A"/>
    <property type="chains" value="A=24-246"/>
</dbReference>
<dbReference type="PDB" id="9AWA">
    <property type="method" value="X-ray"/>
    <property type="resolution" value="1.50 A"/>
    <property type="chains" value="A=24-246"/>
</dbReference>
<dbReference type="PDB" id="9AWB">
    <property type="method" value="X-ray"/>
    <property type="resolution" value="1.50 A"/>
    <property type="chains" value="A=24-246"/>
</dbReference>
<dbReference type="PDB" id="9AWC">
    <property type="method" value="X-ray"/>
    <property type="resolution" value="1.49 A"/>
    <property type="chains" value="A=24-246"/>
</dbReference>
<dbReference type="PDB" id="9AWD">
    <property type="method" value="X-ray"/>
    <property type="resolution" value="1.49 A"/>
    <property type="chains" value="A=24-246"/>
</dbReference>
<dbReference type="PDB" id="9AWF">
    <property type="method" value="X-ray"/>
    <property type="resolution" value="1.50 A"/>
    <property type="chains" value="A=24-246"/>
</dbReference>
<dbReference type="PDB" id="9AWG">
    <property type="method" value="X-ray"/>
    <property type="resolution" value="1.49 A"/>
    <property type="chains" value="A=24-246"/>
</dbReference>
<dbReference type="PDB" id="9AWH">
    <property type="method" value="X-ray"/>
    <property type="resolution" value="1.50 A"/>
    <property type="chains" value="A=24-246"/>
</dbReference>
<dbReference type="PDB" id="9AWI">
    <property type="method" value="X-ray"/>
    <property type="resolution" value="1.48 A"/>
    <property type="chains" value="A=24-246"/>
</dbReference>
<dbReference type="PDB" id="9AWL">
    <property type="method" value="X-ray"/>
    <property type="resolution" value="1.50 A"/>
    <property type="chains" value="A=24-246"/>
</dbReference>
<dbReference type="PDB" id="9AWM">
    <property type="method" value="X-ray"/>
    <property type="resolution" value="1.50 A"/>
    <property type="chains" value="A=24-246"/>
</dbReference>
<dbReference type="PDB" id="9AWN">
    <property type="method" value="X-ray"/>
    <property type="resolution" value="1.48 A"/>
    <property type="chains" value="A=24-246"/>
</dbReference>
<dbReference type="PDB" id="9AWO">
    <property type="method" value="X-ray"/>
    <property type="resolution" value="1.50 A"/>
    <property type="chains" value="A=24-246"/>
</dbReference>
<dbReference type="PDB" id="9AWP">
    <property type="method" value="X-ray"/>
    <property type="resolution" value="1.50 A"/>
    <property type="chains" value="A=24-246"/>
</dbReference>
<dbReference type="PDB" id="9AWQ">
    <property type="method" value="X-ray"/>
    <property type="resolution" value="1.49 A"/>
    <property type="chains" value="A=24-246"/>
</dbReference>
<dbReference type="PDB" id="9AWR">
    <property type="method" value="X-ray"/>
    <property type="resolution" value="1.49 A"/>
    <property type="chains" value="A=24-246"/>
</dbReference>
<dbReference type="PDB" id="9AWS">
    <property type="method" value="X-ray"/>
    <property type="resolution" value="1.50 A"/>
    <property type="chains" value="A=24-246"/>
</dbReference>
<dbReference type="PDB" id="9AWU">
    <property type="method" value="X-ray"/>
    <property type="resolution" value="1.48 A"/>
    <property type="chains" value="A=24-246"/>
</dbReference>
<dbReference type="PDB" id="9AWV">
    <property type="method" value="X-ray"/>
    <property type="resolution" value="1.49 A"/>
    <property type="chains" value="A=24-246"/>
</dbReference>
<dbReference type="PDB" id="9AWZ">
    <property type="method" value="X-ray"/>
    <property type="resolution" value="1.49 A"/>
    <property type="chains" value="A=24-246"/>
</dbReference>
<dbReference type="PDB" id="9BKF">
    <property type="method" value="X-ray"/>
    <property type="resolution" value="1.20 A"/>
    <property type="chains" value="A=24-246"/>
</dbReference>
<dbReference type="PDB" id="9BKG">
    <property type="method" value="X-ray"/>
    <property type="resolution" value="1.57 A"/>
    <property type="chains" value="A=24-246"/>
</dbReference>
<dbReference type="PDB" id="9BOK">
    <property type="method" value="X-ray"/>
    <property type="resolution" value="1.35 A"/>
    <property type="chains" value="A=24-246"/>
</dbReference>
<dbReference type="PDB" id="9BOM">
    <property type="method" value="X-ray"/>
    <property type="resolution" value="1.35 A"/>
    <property type="chains" value="A=24-246"/>
</dbReference>
<dbReference type="PDBsum" id="1AQ7"/>
<dbReference type="PDBsum" id="1AUJ"/>
<dbReference type="PDBsum" id="1AZ8"/>
<dbReference type="PDBsum" id="1BJU"/>
<dbReference type="PDBsum" id="1BJV"/>
<dbReference type="PDBsum" id="1BTP"/>
<dbReference type="PDBsum" id="1BTW"/>
<dbReference type="PDBsum" id="1BTX"/>
<dbReference type="PDBsum" id="1BTY"/>
<dbReference type="PDBsum" id="1BTZ"/>
<dbReference type="PDBsum" id="1C1N"/>
<dbReference type="PDBsum" id="1C1O"/>
<dbReference type="PDBsum" id="1C1P"/>
<dbReference type="PDBsum" id="1C1Q"/>
<dbReference type="PDBsum" id="1C1R"/>
<dbReference type="PDBsum" id="1C1S"/>
<dbReference type="PDBsum" id="1C1T"/>
<dbReference type="PDBsum" id="1C2D"/>
<dbReference type="PDBsum" id="1C2E"/>
<dbReference type="PDBsum" id="1C2F"/>
<dbReference type="PDBsum" id="1C2G"/>
<dbReference type="PDBsum" id="1C2H"/>
<dbReference type="PDBsum" id="1C2I"/>
<dbReference type="PDBsum" id="1C2J"/>
<dbReference type="PDBsum" id="1C2K"/>
<dbReference type="PDBsum" id="1C2L"/>
<dbReference type="PDBsum" id="1C2M"/>
<dbReference type="PDBsum" id="1C5P"/>
<dbReference type="PDBsum" id="1C5Q"/>
<dbReference type="PDBsum" id="1C5R"/>
<dbReference type="PDBsum" id="1C5S"/>
<dbReference type="PDBsum" id="1C5T"/>
<dbReference type="PDBsum" id="1C5U"/>
<dbReference type="PDBsum" id="1C5V"/>
<dbReference type="PDBsum" id="1C9T"/>
<dbReference type="PDBsum" id="1CE5"/>
<dbReference type="PDBsum" id="1D6R"/>
<dbReference type="PDBsum" id="1EB2"/>
<dbReference type="PDBsum" id="1EJM"/>
<dbReference type="PDBsum" id="1EZX"/>
<dbReference type="PDBsum" id="1F0T"/>
<dbReference type="PDBsum" id="1F0U"/>
<dbReference type="PDBsum" id="1F2S"/>
<dbReference type="PDBsum" id="1G36"/>
<dbReference type="PDBsum" id="1G3B"/>
<dbReference type="PDBsum" id="1G3C"/>
<dbReference type="PDBsum" id="1G3D"/>
<dbReference type="PDBsum" id="1G3E"/>
<dbReference type="PDBsum" id="1G9I"/>
<dbReference type="PDBsum" id="1GBT"/>
<dbReference type="PDBsum" id="1GHZ"/>
<dbReference type="PDBsum" id="1GI0"/>
<dbReference type="PDBsum" id="1GI1"/>
<dbReference type="PDBsum" id="1GI2"/>
<dbReference type="PDBsum" id="1GI3"/>
<dbReference type="PDBsum" id="1GI4"/>
<dbReference type="PDBsum" id="1GI5"/>
<dbReference type="PDBsum" id="1GI6"/>
<dbReference type="PDBsum" id="1GJ6"/>
<dbReference type="PDBsum" id="1HJ9"/>
<dbReference type="PDBsum" id="1J8A"/>
<dbReference type="PDBsum" id="1JIR"/>
<dbReference type="PDBsum" id="1JRS"/>
<dbReference type="PDBsum" id="1JRT"/>
<dbReference type="PDBsum" id="1K1I"/>
<dbReference type="PDBsum" id="1K1J"/>
<dbReference type="PDBsum" id="1K1L"/>
<dbReference type="PDBsum" id="1K1M"/>
<dbReference type="PDBsum" id="1K1N"/>
<dbReference type="PDBsum" id="1K1O"/>
<dbReference type="PDBsum" id="1K1P"/>
<dbReference type="PDBsum" id="1LQE"/>
<dbReference type="PDBsum" id="1MAX"/>
<dbReference type="PDBsum" id="1MAY"/>
<dbReference type="PDBsum" id="1MTS"/>
<dbReference type="PDBsum" id="1MTU"/>
<dbReference type="PDBsum" id="1MTV"/>
<dbReference type="PDBsum" id="1MTW"/>
<dbReference type="PDBsum" id="1N6X"/>
<dbReference type="PDBsum" id="1N6Y"/>
<dbReference type="PDBsum" id="1NC6"/>
<dbReference type="PDBsum" id="1NTP"/>
<dbReference type="PDBsum" id="1O2H"/>
<dbReference type="PDBsum" id="1O2I"/>
<dbReference type="PDBsum" id="1O2J"/>
<dbReference type="PDBsum" id="1O2K"/>
<dbReference type="PDBsum" id="1O2L"/>
<dbReference type="PDBsum" id="1O2M"/>
<dbReference type="PDBsum" id="1O2N"/>
<dbReference type="PDBsum" id="1O2O"/>
<dbReference type="PDBsum" id="1O2P"/>
<dbReference type="PDBsum" id="1O2Q"/>
<dbReference type="PDBsum" id="1O2R"/>
<dbReference type="PDBsum" id="1O2S"/>
<dbReference type="PDBsum" id="1O2T"/>
<dbReference type="PDBsum" id="1O2U"/>
<dbReference type="PDBsum" id="1O2V"/>
<dbReference type="PDBsum" id="1O2W"/>
<dbReference type="PDBsum" id="1O2X"/>
<dbReference type="PDBsum" id="1O2Y"/>
<dbReference type="PDBsum" id="1O2Z"/>
<dbReference type="PDBsum" id="1O30"/>
<dbReference type="PDBsum" id="1O31"/>
<dbReference type="PDBsum" id="1O32"/>
<dbReference type="PDBsum" id="1O33"/>
<dbReference type="PDBsum" id="1O34"/>
<dbReference type="PDBsum" id="1O35"/>
<dbReference type="PDBsum" id="1O36"/>
<dbReference type="PDBsum" id="1O37"/>
<dbReference type="PDBsum" id="1O38"/>
<dbReference type="PDBsum" id="1O39"/>
<dbReference type="PDBsum" id="1O3A"/>
<dbReference type="PDBsum" id="1O3B"/>
<dbReference type="PDBsum" id="1O3C"/>
<dbReference type="PDBsum" id="1O3D"/>
<dbReference type="PDBsum" id="1O3E"/>
<dbReference type="PDBsum" id="1O3F"/>
<dbReference type="PDBsum" id="1O3G"/>
<dbReference type="PDBsum" id="1O3H"/>
<dbReference type="PDBsum" id="1O3I"/>
<dbReference type="PDBsum" id="1O3J"/>
<dbReference type="PDBsum" id="1O3K"/>
<dbReference type="PDBsum" id="1O3L"/>
<dbReference type="PDBsum" id="1O3M"/>
<dbReference type="PDBsum" id="1O3N"/>
<dbReference type="PDBsum" id="1O3O"/>
<dbReference type="PDBsum" id="1OPH"/>
<dbReference type="PDBsum" id="1OX1"/>
<dbReference type="PDBsum" id="1OYQ"/>
<dbReference type="PDBsum" id="1P2I"/>
<dbReference type="PDBsum" id="1P2J"/>
<dbReference type="PDBsum" id="1P2K"/>
<dbReference type="PDBsum" id="1PPC"/>
<dbReference type="PDBsum" id="1PPE"/>
<dbReference type="PDBsum" id="1PPH"/>
<dbReference type="PDBsum" id="1QA0"/>
<dbReference type="PDBsum" id="1QB1"/>
<dbReference type="PDBsum" id="1QB6"/>
<dbReference type="PDBsum" id="1QB9"/>
<dbReference type="PDBsum" id="1QBN"/>
<dbReference type="PDBsum" id="1QBO"/>
<dbReference type="PDBsum" id="1QCP"/>
<dbReference type="PDBsum" id="1QL7"/>
<dbReference type="PDBsum" id="1QL8"/>
<dbReference type="PDBsum" id="1RXP"/>
<dbReference type="PDBsum" id="1S0Q"/>
<dbReference type="PDBsum" id="1S0R"/>
<dbReference type="PDBsum" id="1SBW"/>
<dbReference type="PDBsum" id="1SFI"/>
<dbReference type="PDBsum" id="1SMF"/>
<dbReference type="PDBsum" id="1TAB"/>
<dbReference type="PDBsum" id="1TAW"/>
<dbReference type="PDBsum" id="1TGB"/>
<dbReference type="PDBsum" id="1TGC"/>
<dbReference type="PDBsum" id="1TGN"/>
<dbReference type="PDBsum" id="1TGS"/>
<dbReference type="PDBsum" id="1TGT"/>
<dbReference type="PDBsum" id="1TIO"/>
<dbReference type="PDBsum" id="1TLD"/>
<dbReference type="PDBsum" id="1TNG"/>
<dbReference type="PDBsum" id="1TNH"/>
<dbReference type="PDBsum" id="1TNI"/>
<dbReference type="PDBsum" id="1TNJ"/>
<dbReference type="PDBsum" id="1TNK"/>
<dbReference type="PDBsum" id="1TNL"/>
<dbReference type="PDBsum" id="1TPA"/>
<dbReference type="PDBsum" id="1TPO"/>
<dbReference type="PDBsum" id="1TPP"/>
<dbReference type="PDBsum" id="1TPS"/>
<dbReference type="PDBsum" id="1TX7"/>
<dbReference type="PDBsum" id="1TX8"/>
<dbReference type="PDBsum" id="1TYN"/>
<dbReference type="PDBsum" id="1UTN"/>
<dbReference type="PDBsum" id="1UTO"/>
<dbReference type="PDBsum" id="1UTP"/>
<dbReference type="PDBsum" id="1UTQ"/>
<dbReference type="PDBsum" id="1V2J"/>
<dbReference type="PDBsum" id="1V2K"/>
<dbReference type="PDBsum" id="1V2L"/>
<dbReference type="PDBsum" id="1V2M"/>
<dbReference type="PDBsum" id="1V2N"/>
<dbReference type="PDBsum" id="1V2O"/>
<dbReference type="PDBsum" id="1V2P"/>
<dbReference type="PDBsum" id="1V2Q"/>
<dbReference type="PDBsum" id="1V2R"/>
<dbReference type="PDBsum" id="1V2S"/>
<dbReference type="PDBsum" id="1V2T"/>
<dbReference type="PDBsum" id="1V2U"/>
<dbReference type="PDBsum" id="1V2V"/>
<dbReference type="PDBsum" id="1V2W"/>
<dbReference type="PDBsum" id="1XUF"/>
<dbReference type="PDBsum" id="1XUG"/>
<dbReference type="PDBsum" id="1XUH"/>
<dbReference type="PDBsum" id="1XUI"/>
<dbReference type="PDBsum" id="1XUJ"/>
<dbReference type="PDBsum" id="1XUK"/>
<dbReference type="PDBsum" id="1Y3U"/>
<dbReference type="PDBsum" id="1Y3V"/>
<dbReference type="PDBsum" id="1Y3W"/>
<dbReference type="PDBsum" id="1Y3X"/>
<dbReference type="PDBsum" id="1Y3Y"/>
<dbReference type="PDBsum" id="1Y59"/>
<dbReference type="PDBsum" id="1Y5A"/>
<dbReference type="PDBsum" id="1Y5B"/>
<dbReference type="PDBsum" id="1Y5U"/>
<dbReference type="PDBsum" id="1YP9"/>
<dbReference type="PDBsum" id="1YYY"/>
<dbReference type="PDBsum" id="1ZR0"/>
<dbReference type="PDBsum" id="1ZZZ"/>
<dbReference type="PDBsum" id="2A7H"/>
<dbReference type="PDBsum" id="2AGE"/>
<dbReference type="PDBsum" id="2AGG"/>
<dbReference type="PDBsum" id="2AGI"/>
<dbReference type="PDBsum" id="2AH4"/>
<dbReference type="PDBsum" id="2AYW"/>
<dbReference type="PDBsum" id="2BLV"/>
<dbReference type="PDBsum" id="2BLW"/>
<dbReference type="PDBsum" id="2BTC"/>
<dbReference type="PDBsum" id="2BY5"/>
<dbReference type="PDBsum" id="2BY6"/>
<dbReference type="PDBsum" id="2BY7"/>
<dbReference type="PDBsum" id="2BY8"/>
<dbReference type="PDBsum" id="2BY9"/>
<dbReference type="PDBsum" id="2BYA"/>
<dbReference type="PDBsum" id="2BZA"/>
<dbReference type="PDBsum" id="2CMY"/>
<dbReference type="PDBsum" id="2D8W"/>
<dbReference type="PDBsum" id="2F3C"/>
<dbReference type="PDBsum" id="2FI3"/>
<dbReference type="PDBsum" id="2FI4"/>
<dbReference type="PDBsum" id="2FI5"/>
<dbReference type="PDBsum" id="2FTL"/>
<dbReference type="PDBsum" id="2FTM"/>
<dbReference type="PDBsum" id="2FX4"/>
<dbReference type="PDBsum" id="2FX6"/>
<dbReference type="PDBsum" id="2G55"/>
<dbReference type="PDBsum" id="2G5N"/>
<dbReference type="PDBsum" id="2G5V"/>
<dbReference type="PDBsum" id="2G81"/>
<dbReference type="PDBsum" id="2G8T"/>
<dbReference type="PDBsum" id="2ILN"/>
<dbReference type="PDBsum" id="2J9N"/>
<dbReference type="PDBsum" id="2O9Q"/>
<dbReference type="PDBsum" id="2OTV"/>
<dbReference type="PDBsum" id="2OXS"/>
<dbReference type="PDBsum" id="2PLX"/>
<dbReference type="PDBsum" id="2PTC"/>
<dbReference type="PDBsum" id="2PTN"/>
<dbReference type="PDBsum" id="2QN5"/>
<dbReference type="PDBsum" id="2QYI"/>
<dbReference type="PDBsum" id="2TGA"/>
<dbReference type="PDBsum" id="2TGD"/>
<dbReference type="PDBsum" id="2TGP"/>
<dbReference type="PDBsum" id="2TGT"/>
<dbReference type="PDBsum" id="2TIO"/>
<dbReference type="PDBsum" id="2TLD"/>
<dbReference type="PDBsum" id="2TPI"/>
<dbReference type="PDBsum" id="2UUY"/>
<dbReference type="PDBsum" id="2XTT"/>
<dbReference type="PDBsum" id="2ZDK"/>
<dbReference type="PDBsum" id="2ZDL"/>
<dbReference type="PDBsum" id="2ZDM"/>
<dbReference type="PDBsum" id="2ZDN"/>
<dbReference type="PDBsum" id="2ZFS"/>
<dbReference type="PDBsum" id="2ZFT"/>
<dbReference type="PDBsum" id="2ZHD"/>
<dbReference type="PDBsum" id="2ZQ1"/>
<dbReference type="PDBsum" id="2ZQ2"/>
<dbReference type="PDBsum" id="3A7T"/>
<dbReference type="PDBsum" id="3A7V"/>
<dbReference type="PDBsum" id="3A7W"/>
<dbReference type="PDBsum" id="3A7X"/>
<dbReference type="PDBsum" id="3A7Y"/>
<dbReference type="PDBsum" id="3A7Z"/>
<dbReference type="PDBsum" id="3A80"/>
<dbReference type="PDBsum" id="3A81"/>
<dbReference type="PDBsum" id="3A82"/>
<dbReference type="PDBsum" id="3A83"/>
<dbReference type="PDBsum" id="3A84"/>
<dbReference type="PDBsum" id="3A85"/>
<dbReference type="PDBsum" id="3A86"/>
<dbReference type="PDBsum" id="3A87"/>
<dbReference type="PDBsum" id="3A88"/>
<dbReference type="PDBsum" id="3A89"/>
<dbReference type="PDBsum" id="3A8A"/>
<dbReference type="PDBsum" id="3A8B"/>
<dbReference type="PDBsum" id="3A8C"/>
<dbReference type="PDBsum" id="3A8D"/>
<dbReference type="PDBsum" id="3AAS"/>
<dbReference type="PDBsum" id="3AAU"/>
<dbReference type="PDBsum" id="3AAV"/>
<dbReference type="PDBsum" id="3ATI"/>
<dbReference type="PDBsum" id="3ATK"/>
<dbReference type="PDBsum" id="3ATL"/>
<dbReference type="PDBsum" id="3ATM"/>
<dbReference type="PDBsum" id="3BTD"/>
<dbReference type="PDBsum" id="3BTE"/>
<dbReference type="PDBsum" id="3BTF"/>
<dbReference type="PDBsum" id="3BTG"/>
<dbReference type="PDBsum" id="3BTH"/>
<dbReference type="PDBsum" id="3BTK"/>
<dbReference type="PDBsum" id="3BTM"/>
<dbReference type="PDBsum" id="3BTQ"/>
<dbReference type="PDBsum" id="3BTT"/>
<dbReference type="PDBsum" id="3BTW"/>
<dbReference type="PDBsum" id="3D65"/>
<dbReference type="PDBsum" id="3E8L"/>
<dbReference type="PDBsum" id="3GY2"/>
<dbReference type="PDBsum" id="3GY3"/>
<dbReference type="PDBsum" id="3GY4"/>
<dbReference type="PDBsum" id="3GY5"/>
<dbReference type="PDBsum" id="3GY6"/>
<dbReference type="PDBsum" id="3GY7"/>
<dbReference type="PDBsum" id="3GY8"/>
<dbReference type="PDBsum" id="3I29"/>
<dbReference type="PDBsum" id="3ITI"/>
<dbReference type="PDBsum" id="3LJJ"/>
<dbReference type="PDBsum" id="3LJO"/>
<dbReference type="PDBsum" id="3M35"/>
<dbReference type="PDBsum" id="3M7Q"/>
<dbReference type="PDBsum" id="3MFJ"/>
<dbReference type="PDBsum" id="3MI4"/>
<dbReference type="PDBsum" id="3NK8"/>
<dbReference type="PDBsum" id="3NKK"/>
<dbReference type="PDBsum" id="3OTJ"/>
<dbReference type="PDBsum" id="3PLB"/>
<dbReference type="PDBsum" id="3PLK"/>
<dbReference type="PDBsum" id="3PLP"/>
<dbReference type="PDBsum" id="3PM3"/>
<dbReference type="PDBsum" id="3PMJ"/>
<dbReference type="PDBsum" id="3PTB"/>
<dbReference type="PDBsum" id="3PTN"/>
<dbReference type="PDBsum" id="3PWB"/>
<dbReference type="PDBsum" id="3PWC"/>
<dbReference type="PDBsum" id="3PYH"/>
<dbReference type="PDBsum" id="3Q00"/>
<dbReference type="PDBsum" id="3QK1"/>
<dbReference type="PDBsum" id="3RDZ"/>
<dbReference type="PDBsum" id="3RU4"/>
<dbReference type="PDBsum" id="3RXA"/>
<dbReference type="PDBsum" id="3RXB"/>
<dbReference type="PDBsum" id="3RXC"/>
<dbReference type="PDBsum" id="3RXD"/>
<dbReference type="PDBsum" id="3RXE"/>
<dbReference type="PDBsum" id="3RXF"/>
<dbReference type="PDBsum" id="3RXG"/>
<dbReference type="PDBsum" id="3RXH"/>
<dbReference type="PDBsum" id="3RXI"/>
<dbReference type="PDBsum" id="3RXJ"/>
<dbReference type="PDBsum" id="3RXK"/>
<dbReference type="PDBsum" id="3RXL"/>
<dbReference type="PDBsum" id="3RXM"/>
<dbReference type="PDBsum" id="3RXO"/>
<dbReference type="PDBsum" id="3RXP"/>
<dbReference type="PDBsum" id="3RXQ"/>
<dbReference type="PDBsum" id="3RXR"/>
<dbReference type="PDBsum" id="3RXS"/>
<dbReference type="PDBsum" id="3RXT"/>
<dbReference type="PDBsum" id="3RXU"/>
<dbReference type="PDBsum" id="3RXV"/>
<dbReference type="PDBsum" id="3T25"/>
<dbReference type="PDBsum" id="3T26"/>
<dbReference type="PDBsum" id="3T27"/>
<dbReference type="PDBsum" id="3T28"/>
<dbReference type="PDBsum" id="3T29"/>
<dbReference type="PDBsum" id="3TPI"/>
<dbReference type="PDBsum" id="3UNQ"/>
<dbReference type="PDBsum" id="3UNS"/>
<dbReference type="PDBsum" id="3UOP"/>
<dbReference type="PDBsum" id="3UPE"/>
<dbReference type="PDBsum" id="3UQO"/>
<dbReference type="PDBsum" id="3UQV"/>
<dbReference type="PDBsum" id="3UUZ"/>
<dbReference type="PDBsum" id="3UWI"/>
<dbReference type="PDBsum" id="3UY9"/>
<dbReference type="PDBsum" id="3V0X"/>
<dbReference type="PDBsum" id="3V12"/>
<dbReference type="PDBsum" id="3V13"/>
<dbReference type="PDBsum" id="3VEQ"/>
<dbReference type="PDBsum" id="3VPK"/>
<dbReference type="PDBsum" id="4AB8"/>
<dbReference type="PDBsum" id="4AB9"/>
<dbReference type="PDBsum" id="4ABA"/>
<dbReference type="PDBsum" id="4ABB"/>
<dbReference type="PDBsum" id="4ABD"/>
<dbReference type="PDBsum" id="4ABE"/>
<dbReference type="PDBsum" id="4ABF"/>
<dbReference type="PDBsum" id="4ABG"/>
<dbReference type="PDBsum" id="4ABH"/>
<dbReference type="PDBsum" id="4ABI"/>
<dbReference type="PDBsum" id="4ABJ"/>
<dbReference type="PDBsum" id="4AOQ"/>
<dbReference type="PDBsum" id="4AOR"/>
<dbReference type="PDBsum" id="4B1T"/>
<dbReference type="PDBsum" id="4B2A"/>
<dbReference type="PDBsum" id="4B2B"/>
<dbReference type="PDBsum" id="4B2C"/>
<dbReference type="PDBsum" id="4GUX"/>
<dbReference type="PDBsum" id="4HGC"/>
<dbReference type="PDBsum" id="4I8G"/>
<dbReference type="PDBsum" id="4I8H"/>
<dbReference type="PDBsum" id="4I8J"/>
<dbReference type="PDBsum" id="4I8K"/>
<dbReference type="PDBsum" id="4I8L"/>
<dbReference type="PDBsum" id="4J2Y"/>
<dbReference type="PDBsum" id="4KTS"/>
<dbReference type="PDBsum" id="4KTU"/>
<dbReference type="PDBsum" id="4MTB"/>
<dbReference type="PDBsum" id="4NCY"/>
<dbReference type="PDBsum" id="4NIV"/>
<dbReference type="PDBsum" id="4NIW"/>
<dbReference type="PDBsum" id="4NIX"/>
<dbReference type="PDBsum" id="4NIY"/>
<dbReference type="PDBsum" id="4TPI"/>
<dbReference type="PDBsum" id="4TPY"/>
<dbReference type="PDBsum" id="4U2W"/>
<dbReference type="PDBsum" id="4XOJ"/>
<dbReference type="PDBsum" id="4Y0Y"/>
<dbReference type="PDBsum" id="4Y0Z"/>
<dbReference type="PDBsum" id="4Y10"/>
<dbReference type="PDBsum" id="4Y11"/>
<dbReference type="PDBsum" id="4YTA"/>
<dbReference type="PDBsum" id="5EG4"/>
<dbReference type="PDBsum" id="5F6M"/>
<dbReference type="PDBsum" id="5FXL"/>
<dbReference type="PDBsum" id="5GIB"/>
<dbReference type="PDBsum" id="5GXP"/>
<dbReference type="PDBsum" id="5JYI"/>
<dbReference type="PDBsum" id="5K7R"/>
<dbReference type="PDBsum" id="5LGO"/>
<dbReference type="PDBsum" id="5LH4"/>
<dbReference type="PDBsum" id="5LH8"/>
<dbReference type="PDBsum" id="5MN1"/>
<dbReference type="PDBsum" id="5MNA"/>
<dbReference type="PDBsum" id="5MNB"/>
<dbReference type="PDBsum" id="5MNC"/>
<dbReference type="PDBsum" id="5MNE"/>
<dbReference type="PDBsum" id="5MNF"/>
<dbReference type="PDBsum" id="5MNG"/>
<dbReference type="PDBsum" id="5MNH"/>
<dbReference type="PDBsum" id="5MNK"/>
<dbReference type="PDBsum" id="5MNL"/>
<dbReference type="PDBsum" id="5MNM"/>
<dbReference type="PDBsum" id="5MNN"/>
<dbReference type="PDBsum" id="5MNO"/>
<dbReference type="PDBsum" id="5MNP"/>
<dbReference type="PDBsum" id="5MNQ"/>
<dbReference type="PDBsum" id="5MNX"/>
<dbReference type="PDBsum" id="5MNY"/>
<dbReference type="PDBsum" id="5MNZ"/>
<dbReference type="PDBsum" id="5MO0"/>
<dbReference type="PDBsum" id="5MO1"/>
<dbReference type="PDBsum" id="5MO2"/>
<dbReference type="PDBsum" id="5MON"/>
<dbReference type="PDBsum" id="5MOO"/>
<dbReference type="PDBsum" id="5MOP"/>
<dbReference type="PDBsum" id="5MOQ"/>
<dbReference type="PDBsum" id="5MOR"/>
<dbReference type="PDBsum" id="5MOS"/>
<dbReference type="PDBsum" id="5PTP"/>
<dbReference type="PDBsum" id="5T3H"/>
<dbReference type="PDBsum" id="6AVL"/>
<dbReference type="PDBsum" id="6B6N"/>
<dbReference type="PDBsum" id="6B6O"/>
<dbReference type="PDBsum" id="6B6P"/>
<dbReference type="PDBsum" id="6B6Q"/>
<dbReference type="PDBsum" id="6B6R"/>
<dbReference type="PDBsum" id="6B6S"/>
<dbReference type="PDBsum" id="6B6T"/>
<dbReference type="PDBsum" id="6BFP"/>
<dbReference type="PDBsum" id="6BVH"/>
<dbReference type="PDBsum" id="6DWF"/>
<dbReference type="PDBsum" id="6DWH"/>
<dbReference type="PDBsum" id="6DWR"/>
<dbReference type="PDBsum" id="6DWU"/>
<dbReference type="PDBsum" id="6DZF"/>
<dbReference type="PDBsum" id="6E5M"/>
<dbReference type="PDBsum" id="6EAT"/>
<dbReference type="PDBsum" id="6EAU"/>
<dbReference type="PDBsum" id="6EAV"/>
<dbReference type="PDBsum" id="6EAW"/>
<dbReference type="PDBsum" id="6EAX"/>
<dbReference type="PDBsum" id="6FID"/>
<dbReference type="PDBsum" id="6MRQ"/>
<dbReference type="PDBsum" id="6QIH"/>
<dbReference type="PDBsum" id="6QL0"/>
<dbReference type="PDBsum" id="6SUX"/>
<dbReference type="PDBsum" id="6SV0"/>
<dbReference type="PDBsum" id="6SV6"/>
<dbReference type="PDBsum" id="6SV8"/>
<dbReference type="PDBsum" id="6SV9"/>
<dbReference type="PDBsum" id="6SVB"/>
<dbReference type="PDBsum" id="6SVD"/>
<dbReference type="PDBsum" id="6SVG"/>
<dbReference type="PDBsum" id="6SVI"/>
<dbReference type="PDBsum" id="6SVJ"/>
<dbReference type="PDBsum" id="6SVN"/>
<dbReference type="PDBsum" id="6SVR"/>
<dbReference type="PDBsum" id="6SVU"/>
<dbReference type="PDBsum" id="6SVV"/>
<dbReference type="PDBsum" id="6SVW"/>
<dbReference type="PDBsum" id="6SVX"/>
<dbReference type="PDBsum" id="6SVZ"/>
<dbReference type="PDBsum" id="6SW0"/>
<dbReference type="PDBsum" id="6SWV"/>
<dbReference type="PDBsum" id="6SY3"/>
<dbReference type="PDBsum" id="6T0M"/>
<dbReference type="PDBsum" id="6T0P"/>
<dbReference type="PDBsum" id="6T5W"/>
<dbReference type="PDBsum" id="6T9U"/>
<dbReference type="PDBsum" id="6T9V"/>
<dbReference type="PDBsum" id="6U22"/>
<dbReference type="PDBsum" id="6VXY"/>
<dbReference type="PDBsum" id="6XYG"/>
<dbReference type="PDBsum" id="6XYK"/>
<dbReference type="PDBsum" id="6YDY"/>
<dbReference type="PDBsum" id="6YIS"/>
<dbReference type="PDBsum" id="6YIT"/>
<dbReference type="PDBsum" id="6YIU"/>
<dbReference type="PDBsum" id="6YIV"/>
<dbReference type="PDBsum" id="6YIW"/>
<dbReference type="PDBsum" id="6YIX"/>
<dbReference type="PDBsum" id="6YIY"/>
<dbReference type="PDBsum" id="6YZA"/>
<dbReference type="PDBsum" id="6YZC"/>
<dbReference type="PDBsum" id="6ZFJ"/>
<dbReference type="PDBsum" id="6ZFK"/>
<dbReference type="PDBsum" id="6ZQ2"/>
<dbReference type="PDBsum" id="7AL8"/>
<dbReference type="PDBsum" id="7AYS"/>
<dbReference type="PDBsum" id="7BRV"/>
<dbReference type="PDBsum" id="7BRW"/>
<dbReference type="PDBsum" id="7BRX"/>
<dbReference type="PDBsum" id="7BRY"/>
<dbReference type="PDBsum" id="7BRZ"/>
<dbReference type="PDBsum" id="7BS0"/>
<dbReference type="PDBsum" id="7BS1"/>
<dbReference type="PDBsum" id="7BS2"/>
<dbReference type="PDBsum" id="7BS3"/>
<dbReference type="PDBsum" id="7BS4"/>
<dbReference type="PDBsum" id="7BS5"/>
<dbReference type="PDBsum" id="7BS6"/>
<dbReference type="PDBsum" id="7BS7"/>
<dbReference type="PDBsum" id="7BS8"/>
<dbReference type="PDBsum" id="7BS9"/>
<dbReference type="PDBsum" id="7BSA"/>
<dbReference type="PDBsum" id="7JR1"/>
<dbReference type="PDBsum" id="7JR2"/>
<dbReference type="PDBsum" id="7JWX"/>
<dbReference type="PDBsum" id="7PH1"/>
<dbReference type="PDBsum" id="7Q0W"/>
<dbReference type="PDBsum" id="7Q0X"/>
<dbReference type="PDBsum" id="7VO7"/>
<dbReference type="PDBsum" id="7WA0"/>
<dbReference type="PDBsum" id="7WA2"/>
<dbReference type="PDBsum" id="7WB6"/>
<dbReference type="PDBsum" id="7WB7"/>
<dbReference type="PDBsum" id="7WB8"/>
<dbReference type="PDBsum" id="7WB9"/>
<dbReference type="PDBsum" id="7WBA"/>
<dbReference type="PDBsum" id="7Z25"/>
<dbReference type="PDBsum" id="7Z2I"/>
<dbReference type="PDBsum" id="8ADT"/>
<dbReference type="PDBsum" id="8IYV"/>
<dbReference type="PDBsum" id="8IZH"/>
<dbReference type="PDBsum" id="8IZI"/>
<dbReference type="PDBsum" id="8IZK"/>
<dbReference type="PDBsum" id="8KDU"/>
<dbReference type="PDBsum" id="8UO7"/>
<dbReference type="PDBsum" id="8UTL"/>
<dbReference type="PDBsum" id="8WK1"/>
<dbReference type="PDBsum" id="8XNI"/>
<dbReference type="PDBsum" id="8XNJ"/>
<dbReference type="PDBsum" id="9AVX"/>
<dbReference type="PDBsum" id="9AVY"/>
<dbReference type="PDBsum" id="9AVZ"/>
<dbReference type="PDBsum" id="9AW0"/>
<dbReference type="PDBsum" id="9AW1"/>
<dbReference type="PDBsum" id="9AW2"/>
<dbReference type="PDBsum" id="9AW4"/>
<dbReference type="PDBsum" id="9AW8"/>
<dbReference type="PDBsum" id="9AW9"/>
<dbReference type="PDBsum" id="9AWA"/>
<dbReference type="PDBsum" id="9AWB"/>
<dbReference type="PDBsum" id="9AWC"/>
<dbReference type="PDBsum" id="9AWD"/>
<dbReference type="PDBsum" id="9AWF"/>
<dbReference type="PDBsum" id="9AWG"/>
<dbReference type="PDBsum" id="9AWH"/>
<dbReference type="PDBsum" id="9AWI"/>
<dbReference type="PDBsum" id="9AWL"/>
<dbReference type="PDBsum" id="9AWM"/>
<dbReference type="PDBsum" id="9AWN"/>
<dbReference type="PDBsum" id="9AWO"/>
<dbReference type="PDBsum" id="9AWP"/>
<dbReference type="PDBsum" id="9AWQ"/>
<dbReference type="PDBsum" id="9AWR"/>
<dbReference type="PDBsum" id="9AWS"/>
<dbReference type="PDBsum" id="9AWU"/>
<dbReference type="PDBsum" id="9AWV"/>
<dbReference type="PDBsum" id="9AWZ"/>
<dbReference type="PDBsum" id="9BKF"/>
<dbReference type="PDBsum" id="9BKG"/>
<dbReference type="PDBsum" id="9BOK"/>
<dbReference type="PDBsum" id="9BOM"/>
<dbReference type="EMDB" id="EMD-8220"/>
<dbReference type="PCDDB" id="P00760"/>
<dbReference type="SASBDB" id="P00760"/>
<dbReference type="SMR" id="P00760"/>
<dbReference type="BioGRID" id="542655">
    <property type="interactions" value="1"/>
</dbReference>
<dbReference type="CORUM" id="P00760"/>
<dbReference type="FunCoup" id="P00760">
    <property type="interactions" value="85"/>
</dbReference>
<dbReference type="IntAct" id="P00760">
    <property type="interactions" value="5"/>
</dbReference>
<dbReference type="MINT" id="P00760"/>
<dbReference type="STRING" id="9913.ENSBTAP00000004737"/>
<dbReference type="BindingDB" id="P00760"/>
<dbReference type="ChEMBL" id="CHEMBL3769"/>
<dbReference type="DrugCentral" id="P00760"/>
<dbReference type="MEROPS" id="S01.151"/>
<dbReference type="PaxDb" id="9913-ENSBTAP00000004737"/>
<dbReference type="PeptideAtlas" id="P00760"/>
<dbReference type="PRIDE" id="P00760"/>
<dbReference type="Ensembl" id="ENSBTAT00000004737.5">
    <property type="protein sequence ID" value="ENSBTAP00000004737.4"/>
    <property type="gene ID" value="ENSBTAG00000067483.1"/>
</dbReference>
<dbReference type="Ensembl" id="ENSBTAT00000033479.6">
    <property type="protein sequence ID" value="ENSBTAP00000033392.4"/>
    <property type="gene ID" value="ENSBTAG00000060741.1"/>
</dbReference>
<dbReference type="GeneID" id="615026"/>
<dbReference type="GeneID" id="780933"/>
<dbReference type="KEGG" id="bta:615026"/>
<dbReference type="KEGG" id="bta:780933"/>
<dbReference type="CTD" id="5644"/>
<dbReference type="VEuPathDB" id="HostDB:ENSBTAG00000050323"/>
<dbReference type="VEuPathDB" id="HostDB:ENSBTAG00000052726"/>
<dbReference type="eggNOG" id="KOG3627">
    <property type="taxonomic scope" value="Eukaryota"/>
</dbReference>
<dbReference type="GeneTree" id="ENSGT01050000244883"/>
<dbReference type="HOGENOM" id="CLU_006842_7_0_1"/>
<dbReference type="InParanoid" id="P00760"/>
<dbReference type="OMA" id="TMGWGTD"/>
<dbReference type="OrthoDB" id="10059102at2759"/>
<dbReference type="TreeFam" id="TF331065"/>
<dbReference type="BRENDA" id="3.4.21.4">
    <property type="organism ID" value="908"/>
</dbReference>
<dbReference type="SABIO-RK" id="P00760"/>
<dbReference type="EvolutionaryTrace" id="P00760"/>
<dbReference type="PRO" id="PR:P00760"/>
<dbReference type="Proteomes" id="UP000009136">
    <property type="component" value="Chromosome 4"/>
</dbReference>
<dbReference type="Bgee" id="ENSBTAG00000050323">
    <property type="expression patterns" value="Expressed in urinary bladder and 32 other cell types or tissues"/>
</dbReference>
<dbReference type="GO" id="GO:0005615">
    <property type="term" value="C:extracellular space"/>
    <property type="evidence" value="ECO:0000318"/>
    <property type="project" value="GO_Central"/>
</dbReference>
<dbReference type="GO" id="GO:0097180">
    <property type="term" value="C:serine protease inhibitor complex"/>
    <property type="evidence" value="ECO:0000314"/>
    <property type="project" value="CAFA"/>
</dbReference>
<dbReference type="GO" id="GO:0004175">
    <property type="term" value="F:endopeptidase activity"/>
    <property type="evidence" value="ECO:0000314"/>
    <property type="project" value="CAFA"/>
</dbReference>
<dbReference type="GO" id="GO:0046872">
    <property type="term" value="F:metal ion binding"/>
    <property type="evidence" value="ECO:0007669"/>
    <property type="project" value="UniProtKB-KW"/>
</dbReference>
<dbReference type="GO" id="GO:0004252">
    <property type="term" value="F:serine-type endopeptidase activity"/>
    <property type="evidence" value="ECO:0000314"/>
    <property type="project" value="CAFA"/>
</dbReference>
<dbReference type="GO" id="GO:0097655">
    <property type="term" value="F:serpin family protein binding"/>
    <property type="evidence" value="ECO:0000314"/>
    <property type="project" value="CAFA"/>
</dbReference>
<dbReference type="GO" id="GO:0007586">
    <property type="term" value="P:digestion"/>
    <property type="evidence" value="ECO:0007669"/>
    <property type="project" value="UniProtKB-KW"/>
</dbReference>
<dbReference type="GO" id="GO:0006508">
    <property type="term" value="P:proteolysis"/>
    <property type="evidence" value="ECO:0000314"/>
    <property type="project" value="CAFA"/>
</dbReference>
<dbReference type="CDD" id="cd00190">
    <property type="entry name" value="Tryp_SPc"/>
    <property type="match status" value="1"/>
</dbReference>
<dbReference type="DisProt" id="DP00728"/>
<dbReference type="FunFam" id="2.40.10.10:FF:000008">
    <property type="entry name" value="Cationic trypsin"/>
    <property type="match status" value="1"/>
</dbReference>
<dbReference type="FunFam" id="2.40.10.10:FF:000124">
    <property type="entry name" value="Cationic trypsin"/>
    <property type="match status" value="1"/>
</dbReference>
<dbReference type="Gene3D" id="2.40.10.10">
    <property type="entry name" value="Trypsin-like serine proteases"/>
    <property type="match status" value="2"/>
</dbReference>
<dbReference type="InterPro" id="IPR009003">
    <property type="entry name" value="Peptidase_S1_PA"/>
</dbReference>
<dbReference type="InterPro" id="IPR043504">
    <property type="entry name" value="Peptidase_S1_PA_chymotrypsin"/>
</dbReference>
<dbReference type="InterPro" id="IPR001314">
    <property type="entry name" value="Peptidase_S1A"/>
</dbReference>
<dbReference type="InterPro" id="IPR050127">
    <property type="entry name" value="Serine_Proteases_S1"/>
</dbReference>
<dbReference type="InterPro" id="IPR001254">
    <property type="entry name" value="Trypsin_dom"/>
</dbReference>
<dbReference type="InterPro" id="IPR018114">
    <property type="entry name" value="TRYPSIN_HIS"/>
</dbReference>
<dbReference type="InterPro" id="IPR033116">
    <property type="entry name" value="TRYPSIN_SER"/>
</dbReference>
<dbReference type="PANTHER" id="PTHR24264:SF15">
    <property type="entry name" value="RIKEN CDNA 2210010C04 GENE"/>
    <property type="match status" value="1"/>
</dbReference>
<dbReference type="PANTHER" id="PTHR24264">
    <property type="entry name" value="TRYPSIN-RELATED"/>
    <property type="match status" value="1"/>
</dbReference>
<dbReference type="Pfam" id="PF00089">
    <property type="entry name" value="Trypsin"/>
    <property type="match status" value="1"/>
</dbReference>
<dbReference type="PRINTS" id="PR00722">
    <property type="entry name" value="CHYMOTRYPSIN"/>
</dbReference>
<dbReference type="SMART" id="SM00020">
    <property type="entry name" value="Tryp_SPc"/>
    <property type="match status" value="1"/>
</dbReference>
<dbReference type="SUPFAM" id="SSF50494">
    <property type="entry name" value="Trypsin-like serine proteases"/>
    <property type="match status" value="1"/>
</dbReference>
<dbReference type="PROSITE" id="PS50240">
    <property type="entry name" value="TRYPSIN_DOM"/>
    <property type="match status" value="1"/>
</dbReference>
<dbReference type="PROSITE" id="PS00134">
    <property type="entry name" value="TRYPSIN_HIS"/>
    <property type="match status" value="1"/>
</dbReference>
<dbReference type="PROSITE" id="PS00135">
    <property type="entry name" value="TRYPSIN_SER"/>
    <property type="match status" value="1"/>
</dbReference>
<keyword id="KW-0002">3D-structure</keyword>
<keyword id="KW-0106">Calcium</keyword>
<keyword id="KW-0222">Digestion</keyword>
<keyword id="KW-0903">Direct protein sequencing</keyword>
<keyword id="KW-1015">Disulfide bond</keyword>
<keyword id="KW-0378">Hydrolase</keyword>
<keyword id="KW-0479">Metal-binding</keyword>
<keyword id="KW-0645">Protease</keyword>
<keyword id="KW-1185">Reference proteome</keyword>
<keyword id="KW-0964">Secreted</keyword>
<keyword id="KW-0720">Serine protease</keyword>
<keyword id="KW-0732">Signal</keyword>
<keyword id="KW-0865">Zymogen</keyword>
<organism>
    <name type="scientific">Bos taurus</name>
    <name type="common">Bovine</name>
    <dbReference type="NCBI Taxonomy" id="9913"/>
    <lineage>
        <taxon>Eukaryota</taxon>
        <taxon>Metazoa</taxon>
        <taxon>Chordata</taxon>
        <taxon>Craniata</taxon>
        <taxon>Vertebrata</taxon>
        <taxon>Euteleostomi</taxon>
        <taxon>Mammalia</taxon>
        <taxon>Eutheria</taxon>
        <taxon>Laurasiatheria</taxon>
        <taxon>Artiodactyla</taxon>
        <taxon>Ruminantia</taxon>
        <taxon>Pecora</taxon>
        <taxon>Bovidae</taxon>
        <taxon>Bovinae</taxon>
        <taxon>Bos</taxon>
    </lineage>
</organism>
<proteinExistence type="evidence at protein level"/>
<comment type="catalytic activity">
    <reaction>
        <text>Preferential cleavage: Arg-|-Xaa, Lys-|-Xaa.</text>
        <dbReference type="EC" id="3.4.21.4"/>
    </reaction>
</comment>
<comment type="cofactor">
    <cofactor>
        <name>Ca(2+)</name>
        <dbReference type="ChEBI" id="CHEBI:29108"/>
    </cofactor>
    <text>Binds 1 Ca(2+) ion per subunit.</text>
</comment>
<comment type="activity regulation">
    <text evidence="5">Is inhibited by scorpion cyclotide trypsin inhibitor TopI1.</text>
</comment>
<comment type="subunit">
    <text evidence="4">Interacts with SERPINA1.</text>
</comment>
<comment type="interaction">
    <interactant intactId="EBI-986385">
        <id>P00760</id>
    </interactant>
    <interactant intactId="EBI-1032263">
        <id>P00974</id>
    </interactant>
    <organismsDiffer>false</organismsDiffer>
    <experiments>4</experiments>
</comment>
<comment type="interaction">
    <interactant intactId="EBI-986385">
        <id>P00760</id>
    </interactant>
    <interactant intactId="EBI-986224">
        <id>P01009</id>
        <label>SERPINA1</label>
    </interactant>
    <organismsDiffer>true</organismsDiffer>
    <experiments>5</experiments>
</comment>
<comment type="subcellular location">
    <subcellularLocation>
        <location>Secreted</location>
        <location>Extracellular space</location>
    </subcellularLocation>
</comment>
<comment type="tissue specificity">
    <text>Synthesized in the acinar cells of the pancreas.</text>
</comment>
<comment type="PTM">
    <text>Autocatalytic cleavage after Lys-23 leads to beta-trypsin by releasing a terminal hexapeptide. Subsequent cleavage after Lys-148 leads to alpha-trypsin. Further cleavage after Lys-193 yields pseudotrypsin. A cleavage may also occur after Arg-122.</text>
</comment>
<comment type="PTM">
    <text>Not sulfated on tyrosine residue(s).</text>
</comment>
<comment type="similarity">
    <text evidence="3">Belongs to the peptidase S1 family.</text>
</comment>
<reference key="1">
    <citation type="submission" date="2007-03" db="EMBL/GenBank/DDBJ databases">
        <authorList>
            <consortium name="NIH - Mammalian Gene Collection (MGC) project"/>
        </authorList>
    </citation>
    <scope>NUCLEOTIDE SEQUENCE [LARGE SCALE MRNA]</scope>
    <source>
        <strain>Hereford</strain>
        <tissue>Fetal pancreas</tissue>
    </source>
</reference>
<reference key="2">
    <citation type="submission" date="1994-10" db="EMBL/GenBank/DDBJ databases">
        <authorList>
            <person name="Okajima T."/>
            <person name="Maniwa M."/>
            <person name="Nagao S."/>
            <person name="Fujikawa H."/>
            <person name="Goto S."/>
        </authorList>
    </citation>
    <scope>NUCLEOTIDE SEQUENCE [MRNA] OF 4-246</scope>
    <source>
        <tissue>Pancreas</tissue>
    </source>
</reference>
<reference key="3">
    <citation type="journal article" date="1966" name="Biochem. Biophys. Res. Commun.">
        <title>Covalent structure of bovine trypsinogen. The position of the remaining amides.</title>
        <authorList>
            <person name="Mikes O."/>
            <person name="Holeysovsky V."/>
            <person name="Tomasek V."/>
            <person name="Sorm F."/>
        </authorList>
    </citation>
    <scope>PROTEIN SEQUENCE OF 18-246</scope>
    <scope>DISULFIDE BONDS</scope>
</reference>
<reference key="4">
    <citation type="journal article" date="1970" name="Philos. Trans. R. Soc. Lond., B, Biol. Sci.">
        <title>Homologies in serine proteinases.</title>
        <authorList>
            <person name="Hartley B.S."/>
        </authorList>
    </citation>
    <scope>SEQUENCE REVISION</scope>
</reference>
<reference key="5">
    <citation type="journal article" date="1975" name="Biochemistry">
        <title>Amino acid sequence of dogfish trypsin.</title>
        <authorList>
            <person name="Titani K."/>
            <person name="Ericsson L.H."/>
            <person name="Neurath H."/>
            <person name="Walsh K.A."/>
        </authorList>
    </citation>
    <scope>SEQUENCE REVISION</scope>
</reference>
<reference key="6">
    <citation type="journal article" date="2006" name="FEBS J.">
        <title>Human cationic trypsinogen is sulfated on Tyr154.</title>
        <authorList>
            <person name="Sahin-Toth M."/>
            <person name="Kukor Z."/>
            <person name="Nemoda Z."/>
        </authorList>
    </citation>
    <scope>ABSENCE OF SULFATED TYROSINE</scope>
</reference>
<reference key="7">
    <citation type="journal article" date="1965" name="J. Mol. Biol.">
        <title>The disulphide bridges of trypsin.</title>
        <authorList>
            <person name="Kauffman D.L."/>
        </authorList>
    </citation>
    <scope>DISULFIDE BONDS</scope>
</reference>
<reference key="8">
    <citation type="journal article" date="2000" name="Nature">
        <title>Structure of a serpin-protease complex shows inhibition by deformation.</title>
        <authorList>
            <person name="Huntington J.A."/>
            <person name="Read R.J."/>
            <person name="Carrell R.W."/>
        </authorList>
    </citation>
    <scope>INTERACTION WITH HUMAN SERPINA1</scope>
</reference>
<reference key="9">
    <citation type="journal article" date="1975" name="J. Mol. Biol.">
        <title>The refined crystal structure of bovine beta-trypsin at 1.8-A resolution. II. Crystallographic refinement, calcium binding site, benzamidine binding site and active site at pH 7.0.</title>
        <authorList>
            <person name="Bode W."/>
            <person name="Schwager P."/>
        </authorList>
    </citation>
    <scope>X-RAY CRYSTALLOGRAPHY (1.8 ANGSTROMS) OF CALCIUM-BINDING SITE</scope>
</reference>
<reference key="10">
    <citation type="journal article" date="1977" name="Biochemistry">
        <title>Structure of bovine trypsinogen at 1.9-A resolution.</title>
        <authorList>
            <person name="Kossiakoff A.A."/>
            <person name="Chambers J.L."/>
            <person name="Kay L.M."/>
            <person name="Stroud R.M."/>
        </authorList>
    </citation>
    <scope>X-RAY CRYSTALLOGRAPHY (1.9 ANGSTROMS)</scope>
</reference>
<reference key="11">
    <citation type="journal article" date="2007" name="J. Biol. Chem.">
        <title>An unusual helix-turn-helix protease inhibitory motif in a novel trypsin inhibitor from seeds of Veronica (Veronica hederifolia L.).</title>
        <authorList>
            <person name="Conners R."/>
            <person name="Konarev A.V."/>
            <person name="Forsyth J."/>
            <person name="Lovegrove A."/>
            <person name="Marsh J."/>
            <person name="Joseph-Horne T."/>
            <person name="Shewry P."/>
            <person name="Brady R.L."/>
        </authorList>
    </citation>
    <scope>X-RAY CRYSTALLOGRAPHY (1.56 ANGSTROMS) OF 24-246 IN COMPLEX WITH V.HEDERIFOLIA TRYPSIN INHIBITOR</scope>
    <scope>DISULFIDE BONDS</scope>
</reference>
<reference key="12">
    <citation type="journal article" date="2013" name="PLoS ONE">
        <title>The structure of human microplasmin in complex with textilinin-1, an aprotinin-like inhibitor from the Australian brown snake.</title>
        <authorList>
            <person name="Millers E.K."/>
            <person name="Johnson L.A."/>
            <person name="Birrell G.W."/>
            <person name="Masci P.P."/>
            <person name="Lavin M.F."/>
            <person name="de Jersey J."/>
            <person name="Guddat L.W."/>
        </authorList>
    </citation>
    <scope>X-RAY CRYSTALLOGRAPHY (1.64 ANGSTROMS) OF 24-246 IN COMPLEX WITH THE SNAKE VENOM PROTEASE INHIBITOR TEXTILININ-1</scope>
    <scope>DISULFIDE BONDS</scope>
    <scope>METAL-BINDING SITES GLU-75; ASN-77; VAL-80 AND GLU-85</scope>
</reference>
<reference evidence="7" key="13">
    <citation type="journal article" date="2020" name="J. Med. Chem.">
        <title>Head-to-Tail Cyclization after Interaction with Trypsin: A Scorpion Venom Peptide that Resembles Plant Cyclotides.</title>
        <authorList>
            <person name="Mourao C.B.F."/>
            <person name="Brand G.D."/>
            <person name="Fernandes J.P.C."/>
            <person name="Prates M.V."/>
            <person name="Bloch C. Jr."/>
            <person name="Barbosa J.A.R.G."/>
            <person name="Freitas S.M."/>
            <person name="Restano-Cassulini R."/>
            <person name="Possani L.D."/>
            <person name="Schwartz E.F."/>
        </authorList>
    </citation>
    <scope>X-RAY CRYSTALLOGRAPHY (1.29 ANGSTROMS) IN COMPLEX WITH VENOM SCORPION CYCLOTIDE TRYPSIN INHIBITOR TOPI1</scope>
    <scope>ACTIVITY REGULATION</scope>
    <scope>DISULFIDE BONDS</scope>
    <source>
        <tissue>Telson</tissue>
    </source>
</reference>
<evidence type="ECO:0000250" key="1">
    <source>
        <dbReference type="UniProtKB" id="P00762"/>
    </source>
</evidence>
<evidence type="ECO:0000250" key="2">
    <source>
        <dbReference type="UniProtKB" id="P07477"/>
    </source>
</evidence>
<evidence type="ECO:0000255" key="3">
    <source>
        <dbReference type="PROSITE-ProRule" id="PRU00274"/>
    </source>
</evidence>
<evidence type="ECO:0000269" key="4">
    <source>
    </source>
</evidence>
<evidence type="ECO:0000269" key="5">
    <source>
    </source>
</evidence>
<evidence type="ECO:0000269" key="6">
    <source>
    </source>
</evidence>
<evidence type="ECO:0000312" key="7">
    <source>
        <dbReference type="PDB" id="6MRQ"/>
    </source>
</evidence>
<evidence type="ECO:0007744" key="8">
    <source>
        <dbReference type="PDB" id="6MRQ"/>
    </source>
</evidence>
<evidence type="ECO:0007829" key="9">
    <source>
        <dbReference type="PDB" id="1C2D"/>
    </source>
</evidence>
<evidence type="ECO:0007829" key="10">
    <source>
        <dbReference type="PDB" id="1EJM"/>
    </source>
</evidence>
<evidence type="ECO:0007829" key="11">
    <source>
        <dbReference type="PDB" id="1TGS"/>
    </source>
</evidence>
<evidence type="ECO:0007829" key="12">
    <source>
        <dbReference type="PDB" id="1V2J"/>
    </source>
</evidence>
<evidence type="ECO:0007829" key="13">
    <source>
        <dbReference type="PDB" id="4I8H"/>
    </source>
</evidence>
<evidence type="ECO:0007829" key="14">
    <source>
        <dbReference type="PDB" id="4XOJ"/>
    </source>
</evidence>
<evidence type="ECO:0007829" key="15">
    <source>
        <dbReference type="PDB" id="5MN1"/>
    </source>
</evidence>
<evidence type="ECO:0007829" key="16">
    <source>
        <dbReference type="PDB" id="9BOK"/>
    </source>
</evidence>